<evidence type="ECO:0000250" key="1"/>
<evidence type="ECO:0000255" key="2">
    <source>
        <dbReference type="PROSITE-ProRule" id="PRU00139"/>
    </source>
</evidence>
<evidence type="ECO:0000255" key="3">
    <source>
        <dbReference type="PROSITE-ProRule" id="PRU00451"/>
    </source>
</evidence>
<evidence type="ECO:0000256" key="4">
    <source>
        <dbReference type="SAM" id="MobiDB-lite"/>
    </source>
</evidence>
<evidence type="ECO:0000269" key="5">
    <source>
    </source>
</evidence>
<evidence type="ECO:0000269" key="6">
    <source>
    </source>
</evidence>
<evidence type="ECO:0000269" key="7">
    <source>
    </source>
</evidence>
<evidence type="ECO:0000269" key="8">
    <source>
    </source>
</evidence>
<evidence type="ECO:0000269" key="9">
    <source>
    </source>
</evidence>
<evidence type="ECO:0000269" key="10">
    <source>
    </source>
</evidence>
<evidence type="ECO:0000269" key="11">
    <source>
    </source>
</evidence>
<evidence type="ECO:0000269" key="12">
    <source>
    </source>
</evidence>
<evidence type="ECO:0000269" key="13">
    <source>
    </source>
</evidence>
<evidence type="ECO:0000269" key="14">
    <source>
    </source>
</evidence>
<evidence type="ECO:0000269" key="15">
    <source>
    </source>
</evidence>
<evidence type="ECO:0000269" key="16">
    <source>
    </source>
</evidence>
<evidence type="ECO:0000269" key="17">
    <source>
    </source>
</evidence>
<evidence type="ECO:0000269" key="18">
    <source>
    </source>
</evidence>
<evidence type="ECO:0000269" key="19">
    <source>
    </source>
</evidence>
<evidence type="ECO:0000269" key="20">
    <source>
    </source>
</evidence>
<evidence type="ECO:0000269" key="21">
    <source>
    </source>
</evidence>
<evidence type="ECO:0000269" key="22">
    <source>
    </source>
</evidence>
<evidence type="ECO:0000269" key="23">
    <source>
    </source>
</evidence>
<evidence type="ECO:0000269" key="24">
    <source>
    </source>
</evidence>
<evidence type="ECO:0000269" key="25">
    <source ref="3"/>
</evidence>
<evidence type="ECO:0000305" key="26"/>
<evidence type="ECO:0000305" key="27">
    <source>
    </source>
</evidence>
<evidence type="ECO:0007744" key="28">
    <source>
        <dbReference type="PDB" id="5LRX"/>
    </source>
</evidence>
<evidence type="ECO:0007744" key="29">
    <source>
    </source>
</evidence>
<evidence type="ECO:0007744" key="30">
    <source>
    </source>
</evidence>
<evidence type="ECO:0007744" key="31">
    <source>
    </source>
</evidence>
<evidence type="ECO:0007744" key="32">
    <source>
    </source>
</evidence>
<evidence type="ECO:0007829" key="33">
    <source>
        <dbReference type="PDB" id="2EQE"/>
    </source>
</evidence>
<evidence type="ECO:0007829" key="34">
    <source>
        <dbReference type="PDB" id="2EQG"/>
    </source>
</evidence>
<evidence type="ECO:0007829" key="35">
    <source>
        <dbReference type="PDB" id="3DKB"/>
    </source>
</evidence>
<evidence type="ECO:0007829" key="36">
    <source>
        <dbReference type="PDB" id="3OJ3"/>
    </source>
</evidence>
<evidence type="ECO:0007829" key="37">
    <source>
        <dbReference type="PDB" id="3VUX"/>
    </source>
</evidence>
<evidence type="ECO:0007829" key="38">
    <source>
        <dbReference type="PDB" id="3ZJE"/>
    </source>
</evidence>
<evidence type="ECO:0007829" key="39">
    <source>
        <dbReference type="PDB" id="3ZJG"/>
    </source>
</evidence>
<evidence type="ECO:0007829" key="40">
    <source>
        <dbReference type="PDB" id="5LRX"/>
    </source>
</evidence>
<proteinExistence type="evidence at protein level"/>
<dbReference type="EC" id="2.3.2.-"/>
<dbReference type="EC" id="3.4.19.12" evidence="6 9 10 18 21"/>
<dbReference type="EMBL" id="M59465">
    <property type="protein sequence ID" value="AAA51550.1"/>
    <property type="molecule type" value="mRNA"/>
</dbReference>
<dbReference type="EMBL" id="AK312862">
    <property type="protein sequence ID" value="BAG35714.1"/>
    <property type="molecule type" value="mRNA"/>
</dbReference>
<dbReference type="EMBL" id="AY248754">
    <property type="protein sequence ID" value="AAO61093.1"/>
    <property type="molecule type" value="Genomic_DNA"/>
</dbReference>
<dbReference type="EMBL" id="AL357060">
    <property type="status" value="NOT_ANNOTATED_CDS"/>
    <property type="molecule type" value="Genomic_DNA"/>
</dbReference>
<dbReference type="EMBL" id="CH471051">
    <property type="protein sequence ID" value="EAW47925.1"/>
    <property type="molecule type" value="Genomic_DNA"/>
</dbReference>
<dbReference type="EMBL" id="CH471051">
    <property type="protein sequence ID" value="EAW47926.1"/>
    <property type="molecule type" value="Genomic_DNA"/>
</dbReference>
<dbReference type="EMBL" id="BC113871">
    <property type="protein sequence ID" value="AAI13872.1"/>
    <property type="molecule type" value="mRNA"/>
</dbReference>
<dbReference type="EMBL" id="BC114480">
    <property type="protein sequence ID" value="AAI14481.1"/>
    <property type="molecule type" value="mRNA"/>
</dbReference>
<dbReference type="EMBL" id="AL157444">
    <property type="protein sequence ID" value="CAB75664.1"/>
    <property type="molecule type" value="mRNA"/>
</dbReference>
<dbReference type="CCDS" id="CCDS5187.1"/>
<dbReference type="PIR" id="A35797">
    <property type="entry name" value="A35797"/>
</dbReference>
<dbReference type="RefSeq" id="NP_001257436.1">
    <property type="nucleotide sequence ID" value="NM_001270507.2"/>
</dbReference>
<dbReference type="RefSeq" id="NP_001257437.1">
    <property type="nucleotide sequence ID" value="NM_001270508.2"/>
</dbReference>
<dbReference type="RefSeq" id="NP_006281.1">
    <property type="nucleotide sequence ID" value="NM_006290.4"/>
</dbReference>
<dbReference type="RefSeq" id="XP_005267176.1">
    <property type="nucleotide sequence ID" value="XM_005267119.1"/>
</dbReference>
<dbReference type="RefSeq" id="XP_011534397.1">
    <property type="nucleotide sequence ID" value="XM_011536095.2"/>
</dbReference>
<dbReference type="RefSeq" id="XP_024302300.1">
    <property type="nucleotide sequence ID" value="XM_024446532.2"/>
</dbReference>
<dbReference type="RefSeq" id="XP_024302301.1">
    <property type="nucleotide sequence ID" value="XM_024446533.2"/>
</dbReference>
<dbReference type="RefSeq" id="XP_047275239.1">
    <property type="nucleotide sequence ID" value="XM_047419283.1"/>
</dbReference>
<dbReference type="RefSeq" id="XP_054212262.1">
    <property type="nucleotide sequence ID" value="XM_054356287.1"/>
</dbReference>
<dbReference type="RefSeq" id="XP_054212263.1">
    <property type="nucleotide sequence ID" value="XM_054356288.1"/>
</dbReference>
<dbReference type="RefSeq" id="XP_054212264.1">
    <property type="nucleotide sequence ID" value="XM_054356289.1"/>
</dbReference>
<dbReference type="RefSeq" id="XP_054212265.1">
    <property type="nucleotide sequence ID" value="XM_054356290.1"/>
</dbReference>
<dbReference type="PDB" id="2EQE">
    <property type="method" value="NMR"/>
    <property type="chains" value="A=597-631"/>
</dbReference>
<dbReference type="PDB" id="2EQF">
    <property type="method" value="NMR"/>
    <property type="chains" value="A=758-790"/>
</dbReference>
<dbReference type="PDB" id="2EQG">
    <property type="method" value="NMR"/>
    <property type="chains" value="A=381-416"/>
</dbReference>
<dbReference type="PDB" id="2VFJ">
    <property type="method" value="X-ray"/>
    <property type="resolution" value="3.20 A"/>
    <property type="chains" value="A/B/C/D=1-366"/>
</dbReference>
<dbReference type="PDB" id="3DKB">
    <property type="method" value="X-ray"/>
    <property type="resolution" value="2.50 A"/>
    <property type="chains" value="A/B/C/D/E/F=1-370"/>
</dbReference>
<dbReference type="PDB" id="3OJ3">
    <property type="method" value="X-ray"/>
    <property type="resolution" value="2.50 A"/>
    <property type="chains" value="I/J/K/L/M/N/O/P=592-635"/>
</dbReference>
<dbReference type="PDB" id="3OJ4">
    <property type="method" value="X-ray"/>
    <property type="resolution" value="3.40 A"/>
    <property type="chains" value="C/F=592-635"/>
</dbReference>
<dbReference type="PDB" id="3VUW">
    <property type="method" value="X-ray"/>
    <property type="resolution" value="1.95 A"/>
    <property type="chains" value="E/F/G=757-789"/>
</dbReference>
<dbReference type="PDB" id="3VUX">
    <property type="method" value="X-ray"/>
    <property type="resolution" value="1.70 A"/>
    <property type="chains" value="E/F/G=757-790"/>
</dbReference>
<dbReference type="PDB" id="3VUY">
    <property type="method" value="X-ray"/>
    <property type="resolution" value="1.98 A"/>
    <property type="chains" value="D/E/F=757-790"/>
</dbReference>
<dbReference type="PDB" id="3ZJD">
    <property type="method" value="X-ray"/>
    <property type="resolution" value="1.87 A"/>
    <property type="chains" value="A/B=1-366"/>
</dbReference>
<dbReference type="PDB" id="3ZJE">
    <property type="method" value="X-ray"/>
    <property type="resolution" value="1.84 A"/>
    <property type="chains" value="A/B=1-366"/>
</dbReference>
<dbReference type="PDB" id="3ZJF">
    <property type="method" value="X-ray"/>
    <property type="resolution" value="2.20 A"/>
    <property type="chains" value="A/B=1-366"/>
</dbReference>
<dbReference type="PDB" id="3ZJG">
    <property type="method" value="X-ray"/>
    <property type="resolution" value="1.92 A"/>
    <property type="chains" value="A/B=1-366"/>
</dbReference>
<dbReference type="PDB" id="5LRX">
    <property type="method" value="X-ray"/>
    <property type="resolution" value="2.85 A"/>
    <property type="chains" value="A/C/E/F=1-366"/>
</dbReference>
<dbReference type="PDB" id="5V3B">
    <property type="method" value="X-ray"/>
    <property type="resolution" value="3.00 A"/>
    <property type="chains" value="A/B/C/D/E/F=1-366"/>
</dbReference>
<dbReference type="PDB" id="5V3P">
    <property type="method" value="X-ray"/>
    <property type="resolution" value="2.50 A"/>
    <property type="chains" value="A/B/C/D/E/F=1-366"/>
</dbReference>
<dbReference type="PDBsum" id="2EQE"/>
<dbReference type="PDBsum" id="2EQF"/>
<dbReference type="PDBsum" id="2EQG"/>
<dbReference type="PDBsum" id="2VFJ"/>
<dbReference type="PDBsum" id="3DKB"/>
<dbReference type="PDBsum" id="3OJ3"/>
<dbReference type="PDBsum" id="3OJ4"/>
<dbReference type="PDBsum" id="3VUW"/>
<dbReference type="PDBsum" id="3VUX"/>
<dbReference type="PDBsum" id="3VUY"/>
<dbReference type="PDBsum" id="3ZJD"/>
<dbReference type="PDBsum" id="3ZJE"/>
<dbReference type="PDBsum" id="3ZJF"/>
<dbReference type="PDBsum" id="3ZJG"/>
<dbReference type="PDBsum" id="5LRX"/>
<dbReference type="PDBsum" id="5V3B"/>
<dbReference type="PDBsum" id="5V3P"/>
<dbReference type="SMR" id="P21580"/>
<dbReference type="BioGRID" id="112983">
    <property type="interactions" value="204"/>
</dbReference>
<dbReference type="CORUM" id="P21580"/>
<dbReference type="DIP" id="DIP-33804N"/>
<dbReference type="FunCoup" id="P21580">
    <property type="interactions" value="1882"/>
</dbReference>
<dbReference type="IntAct" id="P21580">
    <property type="interactions" value="87"/>
</dbReference>
<dbReference type="MINT" id="P21580"/>
<dbReference type="STRING" id="9606.ENSP00000481570"/>
<dbReference type="ChEMBL" id="CHEMBL4523200"/>
<dbReference type="MEROPS" id="C64.003"/>
<dbReference type="GlyCosmos" id="P21580">
    <property type="glycosylation" value="1 site, 1 glycan"/>
</dbReference>
<dbReference type="GlyGen" id="P21580">
    <property type="glycosylation" value="2 sites, 1 O-linked glycan (1 site)"/>
</dbReference>
<dbReference type="iPTMnet" id="P21580"/>
<dbReference type="PhosphoSitePlus" id="P21580"/>
<dbReference type="BioMuta" id="TNFAIP3"/>
<dbReference type="DMDM" id="112894"/>
<dbReference type="jPOST" id="P21580"/>
<dbReference type="MassIVE" id="P21580"/>
<dbReference type="PaxDb" id="9606-ENSP00000481570"/>
<dbReference type="PeptideAtlas" id="P21580"/>
<dbReference type="ProteomicsDB" id="53879"/>
<dbReference type="Pumba" id="P21580"/>
<dbReference type="Antibodypedia" id="1049">
    <property type="antibodies" value="521 antibodies from 46 providers"/>
</dbReference>
<dbReference type="DNASU" id="7128"/>
<dbReference type="Ensembl" id="ENST00000237289.8">
    <property type="protein sequence ID" value="ENSP00000237289.4"/>
    <property type="gene ID" value="ENSG00000118503.18"/>
</dbReference>
<dbReference type="Ensembl" id="ENST00000420009.6">
    <property type="protein sequence ID" value="ENSP00000401562.2"/>
    <property type="gene ID" value="ENSG00000118503.18"/>
</dbReference>
<dbReference type="Ensembl" id="ENST00000421450.2">
    <property type="protein sequence ID" value="ENSP00000393577.2"/>
    <property type="gene ID" value="ENSG00000118503.18"/>
</dbReference>
<dbReference type="Ensembl" id="ENST00000433680.2">
    <property type="protein sequence ID" value="ENSP00000409845.2"/>
    <property type="gene ID" value="ENSG00000118503.18"/>
</dbReference>
<dbReference type="Ensembl" id="ENST00000612899.5">
    <property type="protein sequence ID" value="ENSP00000481570.1"/>
    <property type="gene ID" value="ENSG00000118503.18"/>
</dbReference>
<dbReference type="GeneID" id="7128"/>
<dbReference type="KEGG" id="hsa:7128"/>
<dbReference type="MANE-Select" id="ENST00000612899.5">
    <property type="protein sequence ID" value="ENSP00000481570.1"/>
    <property type="RefSeq nucleotide sequence ID" value="NM_001270508.2"/>
    <property type="RefSeq protein sequence ID" value="NP_001257437.1"/>
</dbReference>
<dbReference type="UCSC" id="uc003qhr.5">
    <property type="organism name" value="human"/>
</dbReference>
<dbReference type="AGR" id="HGNC:11896"/>
<dbReference type="CTD" id="7128"/>
<dbReference type="DisGeNET" id="7128"/>
<dbReference type="GeneCards" id="TNFAIP3"/>
<dbReference type="GeneReviews" id="TNFAIP3"/>
<dbReference type="HGNC" id="HGNC:11896">
    <property type="gene designation" value="TNFAIP3"/>
</dbReference>
<dbReference type="HPA" id="ENSG00000118503">
    <property type="expression patterns" value="Tissue enhanced (bone marrow, urinary bladder)"/>
</dbReference>
<dbReference type="MalaCards" id="TNFAIP3"/>
<dbReference type="MIM" id="191163">
    <property type="type" value="gene"/>
</dbReference>
<dbReference type="MIM" id="616744">
    <property type="type" value="phenotype"/>
</dbReference>
<dbReference type="neXtProt" id="NX_P21580"/>
<dbReference type="OpenTargets" id="ENSG00000118503"/>
<dbReference type="Orphanet" id="674762">
    <property type="disease" value="Early-onset autoinflammatory syndrome due to A20 haploinsufficiency"/>
</dbReference>
<dbReference type="Orphanet" id="536">
    <property type="disease" value="Systemic lupus erythematosus"/>
</dbReference>
<dbReference type="PharmGKB" id="PA36593"/>
<dbReference type="VEuPathDB" id="HostDB:ENSG00000118503"/>
<dbReference type="eggNOG" id="KOG4345">
    <property type="taxonomic scope" value="Eukaryota"/>
</dbReference>
<dbReference type="GeneTree" id="ENSGT00940000158448"/>
<dbReference type="HOGENOM" id="CLU_019606_0_0_1"/>
<dbReference type="InParanoid" id="P21580"/>
<dbReference type="OMA" id="KCSGYCN"/>
<dbReference type="OrthoDB" id="10064699at2759"/>
<dbReference type="PAN-GO" id="P21580">
    <property type="GO annotations" value="10 GO annotations based on evolutionary models"/>
</dbReference>
<dbReference type="PhylomeDB" id="P21580"/>
<dbReference type="TreeFam" id="TF323312"/>
<dbReference type="PathwayCommons" id="P21580"/>
<dbReference type="Reactome" id="R-HSA-168638">
    <property type="pathway name" value="NOD1/2 Signaling Pathway"/>
</dbReference>
<dbReference type="Reactome" id="R-HSA-5357786">
    <property type="pathway name" value="TNFR1-induced proapoptotic signaling"/>
</dbReference>
<dbReference type="Reactome" id="R-HSA-5357905">
    <property type="pathway name" value="Regulation of TNFR1 signaling"/>
</dbReference>
<dbReference type="Reactome" id="R-HSA-5357956">
    <property type="pathway name" value="TNFR1-induced NF-kappa-B signaling pathway"/>
</dbReference>
<dbReference type="Reactome" id="R-HSA-5689896">
    <property type="pathway name" value="Ovarian tumor domain proteases"/>
</dbReference>
<dbReference type="Reactome" id="R-HSA-936440">
    <property type="pathway name" value="Negative regulators of DDX58/IFIH1 signaling"/>
</dbReference>
<dbReference type="SignaLink" id="P21580"/>
<dbReference type="SIGNOR" id="P21580"/>
<dbReference type="BioGRID-ORCS" id="7128">
    <property type="hits" value="35 hits in 1222 CRISPR screens"/>
</dbReference>
<dbReference type="ChiTaRS" id="TNFAIP3">
    <property type="organism name" value="human"/>
</dbReference>
<dbReference type="EvolutionaryTrace" id="P21580"/>
<dbReference type="GeneWiki" id="TNFAIP3"/>
<dbReference type="GenomeRNAi" id="7128"/>
<dbReference type="Pharos" id="P21580">
    <property type="development level" value="Tbio"/>
</dbReference>
<dbReference type="PRO" id="PR:P21580"/>
<dbReference type="Proteomes" id="UP000005640">
    <property type="component" value="Chromosome 6"/>
</dbReference>
<dbReference type="RNAct" id="P21580">
    <property type="molecule type" value="protein"/>
</dbReference>
<dbReference type="Bgee" id="ENSG00000118503">
    <property type="expression patterns" value="Expressed in vena cava and 191 other cell types or tissues"/>
</dbReference>
<dbReference type="ExpressionAtlas" id="P21580">
    <property type="expression patterns" value="baseline and differential"/>
</dbReference>
<dbReference type="GO" id="GO:0005737">
    <property type="term" value="C:cytoplasm"/>
    <property type="evidence" value="ECO:0000318"/>
    <property type="project" value="GO_Central"/>
</dbReference>
<dbReference type="GO" id="GO:0005829">
    <property type="term" value="C:cytosol"/>
    <property type="evidence" value="ECO:0000304"/>
    <property type="project" value="Reactome"/>
</dbReference>
<dbReference type="GO" id="GO:0070062">
    <property type="term" value="C:extracellular exosome"/>
    <property type="evidence" value="ECO:0007005"/>
    <property type="project" value="UniProtKB"/>
</dbReference>
<dbReference type="GO" id="GO:0005764">
    <property type="term" value="C:lysosome"/>
    <property type="evidence" value="ECO:0007669"/>
    <property type="project" value="UniProtKB-SubCell"/>
</dbReference>
<dbReference type="GO" id="GO:0005634">
    <property type="term" value="C:nucleus"/>
    <property type="evidence" value="ECO:0000314"/>
    <property type="project" value="HGNC-UCL"/>
</dbReference>
<dbReference type="GO" id="GO:0004843">
    <property type="term" value="F:cysteine-type deubiquitinase activity"/>
    <property type="evidence" value="ECO:0000314"/>
    <property type="project" value="UniProtKB"/>
</dbReference>
<dbReference type="GO" id="GO:0003677">
    <property type="term" value="F:DNA binding"/>
    <property type="evidence" value="ECO:0007669"/>
    <property type="project" value="UniProtKB-KW"/>
</dbReference>
<dbReference type="GO" id="GO:0042802">
    <property type="term" value="F:identical protein binding"/>
    <property type="evidence" value="ECO:0000353"/>
    <property type="project" value="IntAct"/>
</dbReference>
<dbReference type="GO" id="GO:0061578">
    <property type="term" value="F:K63-linked deubiquitinase activity"/>
    <property type="evidence" value="ECO:0000269"/>
    <property type="project" value="Reactome"/>
</dbReference>
<dbReference type="GO" id="GO:0070530">
    <property type="term" value="F:K63-linked polyubiquitin modification-dependent protein binding"/>
    <property type="evidence" value="ECO:0000318"/>
    <property type="project" value="GO_Central"/>
</dbReference>
<dbReference type="GO" id="GO:0019900">
    <property type="term" value="F:kinase binding"/>
    <property type="evidence" value="ECO:0007669"/>
    <property type="project" value="Ensembl"/>
</dbReference>
<dbReference type="GO" id="GO:0002020">
    <property type="term" value="F:protease binding"/>
    <property type="evidence" value="ECO:0000353"/>
    <property type="project" value="BHF-UCL"/>
</dbReference>
<dbReference type="GO" id="GO:0043130">
    <property type="term" value="F:ubiquitin binding"/>
    <property type="evidence" value="ECO:0000353"/>
    <property type="project" value="BHF-UCL"/>
</dbReference>
<dbReference type="GO" id="GO:0004842">
    <property type="term" value="F:ubiquitin-protein transferase activity"/>
    <property type="evidence" value="ECO:0000314"/>
    <property type="project" value="UniProtKB"/>
</dbReference>
<dbReference type="GO" id="GO:0008270">
    <property type="term" value="F:zinc ion binding"/>
    <property type="evidence" value="ECO:0007669"/>
    <property type="project" value="UniProtKB-KW"/>
</dbReference>
<dbReference type="GO" id="GO:0006915">
    <property type="term" value="P:apoptotic process"/>
    <property type="evidence" value="ECO:0007669"/>
    <property type="project" value="UniProtKB-KW"/>
</dbReference>
<dbReference type="GO" id="GO:0001922">
    <property type="term" value="P:B-1 B cell homeostasis"/>
    <property type="evidence" value="ECO:0000250"/>
    <property type="project" value="BHF-UCL"/>
</dbReference>
<dbReference type="GO" id="GO:0016477">
    <property type="term" value="P:cell migration"/>
    <property type="evidence" value="ECO:0000318"/>
    <property type="project" value="GO_Central"/>
</dbReference>
<dbReference type="GO" id="GO:0070301">
    <property type="term" value="P:cellular response to hydrogen peroxide"/>
    <property type="evidence" value="ECO:0000250"/>
    <property type="project" value="UniProtKB"/>
</dbReference>
<dbReference type="GO" id="GO:0071222">
    <property type="term" value="P:cellular response to lipopolysaccharide"/>
    <property type="evidence" value="ECO:0000314"/>
    <property type="project" value="BHF-UCL"/>
</dbReference>
<dbReference type="GO" id="GO:0007010">
    <property type="term" value="P:cytoskeleton organization"/>
    <property type="evidence" value="ECO:0000318"/>
    <property type="project" value="GO_Central"/>
</dbReference>
<dbReference type="GO" id="GO:0072666">
    <property type="term" value="P:establishment of protein localization to vacuole"/>
    <property type="evidence" value="ECO:0007669"/>
    <property type="project" value="Ensembl"/>
</dbReference>
<dbReference type="GO" id="GO:0006954">
    <property type="term" value="P:inflammatory response"/>
    <property type="evidence" value="ECO:0007669"/>
    <property type="project" value="UniProtKB-KW"/>
</dbReference>
<dbReference type="GO" id="GO:0050869">
    <property type="term" value="P:negative regulation of B cell activation"/>
    <property type="evidence" value="ECO:0000250"/>
    <property type="project" value="BHF-UCL"/>
</dbReference>
<dbReference type="GO" id="GO:0045779">
    <property type="term" value="P:negative regulation of bone resorption"/>
    <property type="evidence" value="ECO:0000303"/>
    <property type="project" value="BHF-UCL"/>
</dbReference>
<dbReference type="GO" id="GO:0043124">
    <property type="term" value="P:negative regulation of canonical NF-kappaB signal transduction"/>
    <property type="evidence" value="ECO:0000314"/>
    <property type="project" value="UniProtKB"/>
</dbReference>
<dbReference type="GO" id="GO:2000349">
    <property type="term" value="P:negative regulation of CD40 signaling pathway"/>
    <property type="evidence" value="ECO:0000315"/>
    <property type="project" value="BHF-UCL"/>
</dbReference>
<dbReference type="GO" id="GO:0002677">
    <property type="term" value="P:negative regulation of chronic inflammatory response"/>
    <property type="evidence" value="ECO:0007669"/>
    <property type="project" value="Ensembl"/>
</dbReference>
<dbReference type="GO" id="GO:2000352">
    <property type="term" value="P:negative regulation of endothelial cell apoptotic process"/>
    <property type="evidence" value="ECO:0000314"/>
    <property type="project" value="BHF-UCL"/>
</dbReference>
<dbReference type="GO" id="GO:1902042">
    <property type="term" value="P:negative regulation of extrinsic apoptotic signaling pathway via death domain receptors"/>
    <property type="evidence" value="ECO:0000314"/>
    <property type="project" value="BHF-UCL"/>
</dbReference>
<dbReference type="GO" id="GO:0050728">
    <property type="term" value="P:negative regulation of inflammatory response"/>
    <property type="evidence" value="ECO:0000250"/>
    <property type="project" value="BHF-UCL"/>
</dbReference>
<dbReference type="GO" id="GO:0045824">
    <property type="term" value="P:negative regulation of innate immune response"/>
    <property type="evidence" value="ECO:0000250"/>
    <property type="project" value="UniProtKB"/>
</dbReference>
<dbReference type="GO" id="GO:0032691">
    <property type="term" value="P:negative regulation of interleukin-1 beta production"/>
    <property type="evidence" value="ECO:0000315"/>
    <property type="project" value="MGI"/>
</dbReference>
<dbReference type="GO" id="GO:0032703">
    <property type="term" value="P:negative regulation of interleukin-2 production"/>
    <property type="evidence" value="ECO:0000315"/>
    <property type="project" value="BHF-UCL"/>
</dbReference>
<dbReference type="GO" id="GO:0032715">
    <property type="term" value="P:negative regulation of interleukin-6 production"/>
    <property type="evidence" value="ECO:0000250"/>
    <property type="project" value="BHF-UCL"/>
</dbReference>
<dbReference type="GO" id="GO:0070429">
    <property type="term" value="P:negative regulation of nucleotide-binding oligomerization domain containing 1 signaling pathway"/>
    <property type="evidence" value="ECO:0007669"/>
    <property type="project" value="Ensembl"/>
</dbReference>
<dbReference type="GO" id="GO:0070433">
    <property type="term" value="P:negative regulation of nucleotide-binding oligomerization domain containing 2 signaling pathway"/>
    <property type="evidence" value="ECO:0007669"/>
    <property type="project" value="Ensembl"/>
</dbReference>
<dbReference type="GO" id="GO:0090291">
    <property type="term" value="P:negative regulation of osteoclast proliferation"/>
    <property type="evidence" value="ECO:0000303"/>
    <property type="project" value="BHF-UCL"/>
</dbReference>
<dbReference type="GO" id="GO:0031397">
    <property type="term" value="P:negative regulation of protein ubiquitination"/>
    <property type="evidence" value="ECO:0000314"/>
    <property type="project" value="BHF-UCL"/>
</dbReference>
<dbReference type="GO" id="GO:0048662">
    <property type="term" value="P:negative regulation of smooth muscle cell proliferation"/>
    <property type="evidence" value="ECO:0000314"/>
    <property type="project" value="BHF-UCL"/>
</dbReference>
<dbReference type="GO" id="GO:0034136">
    <property type="term" value="P:negative regulation of toll-like receptor 2 signaling pathway"/>
    <property type="evidence" value="ECO:0000303"/>
    <property type="project" value="BHF-UCL"/>
</dbReference>
<dbReference type="GO" id="GO:0034140">
    <property type="term" value="P:negative regulation of toll-like receptor 3 signaling pathway"/>
    <property type="evidence" value="ECO:0000314"/>
    <property type="project" value="BHF-UCL"/>
</dbReference>
<dbReference type="GO" id="GO:0034144">
    <property type="term" value="P:negative regulation of toll-like receptor 4 signaling pathway"/>
    <property type="evidence" value="ECO:0000303"/>
    <property type="project" value="BHF-UCL"/>
</dbReference>
<dbReference type="GO" id="GO:0034148">
    <property type="term" value="P:negative regulation of toll-like receptor 5 signaling pathway"/>
    <property type="evidence" value="ECO:0007669"/>
    <property type="project" value="Ensembl"/>
</dbReference>
<dbReference type="GO" id="GO:0032720">
    <property type="term" value="P:negative regulation of tumor necrosis factor production"/>
    <property type="evidence" value="ECO:0000250"/>
    <property type="project" value="BHF-UCL"/>
</dbReference>
<dbReference type="GO" id="GO:0035872">
    <property type="term" value="P:nucleotide-binding domain, leucine rich repeat containing receptor signaling pathway"/>
    <property type="evidence" value="ECO:0000304"/>
    <property type="project" value="Reactome"/>
</dbReference>
<dbReference type="GO" id="GO:2000347">
    <property type="term" value="P:positive regulation of hepatocyte proliferation"/>
    <property type="evidence" value="ECO:0007669"/>
    <property type="project" value="Ensembl"/>
</dbReference>
<dbReference type="GO" id="GO:0045732">
    <property type="term" value="P:positive regulation of protein catabolic process"/>
    <property type="evidence" value="ECO:0000314"/>
    <property type="project" value="BHF-UCL"/>
</dbReference>
<dbReference type="GO" id="GO:0030177">
    <property type="term" value="P:positive regulation of Wnt signaling pathway"/>
    <property type="evidence" value="ECO:0000318"/>
    <property type="project" value="GO_Central"/>
</dbReference>
<dbReference type="GO" id="GO:0016579">
    <property type="term" value="P:protein deubiquitination"/>
    <property type="evidence" value="ECO:0000304"/>
    <property type="project" value="BHF-UCL"/>
</dbReference>
<dbReference type="GO" id="GO:0071947">
    <property type="term" value="P:protein deubiquitination involved in ubiquitin-dependent protein catabolic process"/>
    <property type="evidence" value="ECO:0000318"/>
    <property type="project" value="GO_Central"/>
</dbReference>
<dbReference type="GO" id="GO:0035871">
    <property type="term" value="P:protein K11-linked deubiquitination"/>
    <property type="evidence" value="ECO:0000314"/>
    <property type="project" value="UniProtKB"/>
</dbReference>
<dbReference type="GO" id="GO:0071108">
    <property type="term" value="P:protein K48-linked deubiquitination"/>
    <property type="evidence" value="ECO:0000314"/>
    <property type="project" value="UniProtKB"/>
</dbReference>
<dbReference type="GO" id="GO:0070936">
    <property type="term" value="P:protein K48-linked ubiquitination"/>
    <property type="evidence" value="ECO:0000314"/>
    <property type="project" value="UniProtKB"/>
</dbReference>
<dbReference type="GO" id="GO:0070536">
    <property type="term" value="P:protein K63-linked deubiquitination"/>
    <property type="evidence" value="ECO:0000314"/>
    <property type="project" value="UniProtKB"/>
</dbReference>
<dbReference type="GO" id="GO:0050691">
    <property type="term" value="P:regulation of defense response to virus by host"/>
    <property type="evidence" value="ECO:0000303"/>
    <property type="project" value="BHF-UCL"/>
</dbReference>
<dbReference type="GO" id="GO:0002634">
    <property type="term" value="P:regulation of germinal center formation"/>
    <property type="evidence" value="ECO:0000250"/>
    <property type="project" value="BHF-UCL"/>
</dbReference>
<dbReference type="GO" id="GO:0010803">
    <property type="term" value="P:regulation of tumor necrosis factor-mediated signaling pathway"/>
    <property type="evidence" value="ECO:0000304"/>
    <property type="project" value="Reactome"/>
</dbReference>
<dbReference type="GO" id="GO:0061043">
    <property type="term" value="P:regulation of vascular wound healing"/>
    <property type="evidence" value="ECO:0000303"/>
    <property type="project" value="BHF-UCL"/>
</dbReference>
<dbReference type="GO" id="GO:0002237">
    <property type="term" value="P:response to molecule of bacterial origin"/>
    <property type="evidence" value="ECO:0000314"/>
    <property type="project" value="BHF-UCL"/>
</dbReference>
<dbReference type="GO" id="GO:0032495">
    <property type="term" value="P:response to muramyl dipeptide"/>
    <property type="evidence" value="ECO:0007669"/>
    <property type="project" value="Ensembl"/>
</dbReference>
<dbReference type="GO" id="GO:0072573">
    <property type="term" value="P:tolerance induction to lipopolysaccharide"/>
    <property type="evidence" value="ECO:0000315"/>
    <property type="project" value="BHF-UCL"/>
</dbReference>
<dbReference type="CDD" id="cd22766">
    <property type="entry name" value="OTU_TNFAIP3"/>
    <property type="match status" value="1"/>
</dbReference>
<dbReference type="FunFam" id="4.10.240.30:FF:000001">
    <property type="entry name" value="Tumor necrosis factor alpha-induced protein 3"/>
    <property type="match status" value="1"/>
</dbReference>
<dbReference type="FunFam" id="4.10.240.30:FF:000003">
    <property type="entry name" value="Tumor necrosis factor alpha-induced protein 3"/>
    <property type="match status" value="1"/>
</dbReference>
<dbReference type="FunFam" id="1.20.5.4770:FF:000005">
    <property type="entry name" value="tumor necrosis factor alpha-induced protein 3"/>
    <property type="match status" value="1"/>
</dbReference>
<dbReference type="FunFam" id="3.90.70.80:FF:000011">
    <property type="entry name" value="tumor necrosis factor alpha-induced protein 3"/>
    <property type="match status" value="1"/>
</dbReference>
<dbReference type="FunFam" id="4.10.240.30:FF:000004">
    <property type="entry name" value="tumor necrosis factor alpha-induced protein 3 isoform X2"/>
    <property type="match status" value="1"/>
</dbReference>
<dbReference type="FunFam" id="4.10.240.30:FF:000002">
    <property type="entry name" value="Tumor necrosis factor, alpha-induced protein 3"/>
    <property type="match status" value="1"/>
</dbReference>
<dbReference type="Gene3D" id="1.20.5.4770">
    <property type="match status" value="1"/>
</dbReference>
<dbReference type="Gene3D" id="3.90.70.80">
    <property type="match status" value="1"/>
</dbReference>
<dbReference type="Gene3D" id="4.10.240.30">
    <property type="match status" value="3"/>
</dbReference>
<dbReference type="InterPro" id="IPR051346">
    <property type="entry name" value="OTU_Deubiquitinase"/>
</dbReference>
<dbReference type="InterPro" id="IPR003323">
    <property type="entry name" value="OTU_dom"/>
</dbReference>
<dbReference type="InterPro" id="IPR002653">
    <property type="entry name" value="Znf_A20"/>
</dbReference>
<dbReference type="PANTHER" id="PTHR13367:SF3">
    <property type="entry name" value="TUMOR NECROSIS FACTOR ALPHA-INDUCED PROTEIN 3"/>
    <property type="match status" value="1"/>
</dbReference>
<dbReference type="PANTHER" id="PTHR13367">
    <property type="entry name" value="UBIQUITIN THIOESTERASE"/>
    <property type="match status" value="1"/>
</dbReference>
<dbReference type="Pfam" id="PF02338">
    <property type="entry name" value="OTU"/>
    <property type="match status" value="1"/>
</dbReference>
<dbReference type="Pfam" id="PF01754">
    <property type="entry name" value="zf-A20"/>
    <property type="match status" value="4"/>
</dbReference>
<dbReference type="SMART" id="SM00259">
    <property type="entry name" value="ZnF_A20"/>
    <property type="match status" value="7"/>
</dbReference>
<dbReference type="PROSITE" id="PS50802">
    <property type="entry name" value="OTU"/>
    <property type="match status" value="1"/>
</dbReference>
<dbReference type="PROSITE" id="PS51036">
    <property type="entry name" value="ZF_A20"/>
    <property type="match status" value="7"/>
</dbReference>
<name>TNAP3_HUMAN</name>
<reference key="1">
    <citation type="journal article" date="1990" name="J. Biol. Chem.">
        <title>The A20 cDNA induced by tumor necrosis factor alpha encodes a novel type of zinc finger protein.</title>
        <authorList>
            <person name="Opipari A.W. Jr."/>
            <person name="Boguski M.S."/>
            <person name="Dixit V.M."/>
        </authorList>
    </citation>
    <scope>NUCLEOTIDE SEQUENCE [MRNA]</scope>
</reference>
<reference key="2">
    <citation type="journal article" date="2004" name="Nat. Genet.">
        <title>Complete sequencing and characterization of 21,243 full-length human cDNAs.</title>
        <authorList>
            <person name="Ota T."/>
            <person name="Suzuki Y."/>
            <person name="Nishikawa T."/>
            <person name="Otsuki T."/>
            <person name="Sugiyama T."/>
            <person name="Irie R."/>
            <person name="Wakamatsu A."/>
            <person name="Hayashi K."/>
            <person name="Sato H."/>
            <person name="Nagai K."/>
            <person name="Kimura K."/>
            <person name="Makita H."/>
            <person name="Sekine M."/>
            <person name="Obayashi M."/>
            <person name="Nishi T."/>
            <person name="Shibahara T."/>
            <person name="Tanaka T."/>
            <person name="Ishii S."/>
            <person name="Yamamoto J."/>
            <person name="Saito K."/>
            <person name="Kawai Y."/>
            <person name="Isono Y."/>
            <person name="Nakamura Y."/>
            <person name="Nagahari K."/>
            <person name="Murakami K."/>
            <person name="Yasuda T."/>
            <person name="Iwayanagi T."/>
            <person name="Wagatsuma M."/>
            <person name="Shiratori A."/>
            <person name="Sudo H."/>
            <person name="Hosoiri T."/>
            <person name="Kaku Y."/>
            <person name="Kodaira H."/>
            <person name="Kondo H."/>
            <person name="Sugawara M."/>
            <person name="Takahashi M."/>
            <person name="Kanda K."/>
            <person name="Yokoi T."/>
            <person name="Furuya T."/>
            <person name="Kikkawa E."/>
            <person name="Omura Y."/>
            <person name="Abe K."/>
            <person name="Kamihara K."/>
            <person name="Katsuta N."/>
            <person name="Sato K."/>
            <person name="Tanikawa M."/>
            <person name="Yamazaki M."/>
            <person name="Ninomiya K."/>
            <person name="Ishibashi T."/>
            <person name="Yamashita H."/>
            <person name="Murakawa K."/>
            <person name="Fujimori K."/>
            <person name="Tanai H."/>
            <person name="Kimata M."/>
            <person name="Watanabe M."/>
            <person name="Hiraoka S."/>
            <person name="Chiba Y."/>
            <person name="Ishida S."/>
            <person name="Ono Y."/>
            <person name="Takiguchi S."/>
            <person name="Watanabe S."/>
            <person name="Yosida M."/>
            <person name="Hotuta T."/>
            <person name="Kusano J."/>
            <person name="Kanehori K."/>
            <person name="Takahashi-Fujii A."/>
            <person name="Hara H."/>
            <person name="Tanase T.-O."/>
            <person name="Nomura Y."/>
            <person name="Togiya S."/>
            <person name="Komai F."/>
            <person name="Hara R."/>
            <person name="Takeuchi K."/>
            <person name="Arita M."/>
            <person name="Imose N."/>
            <person name="Musashino K."/>
            <person name="Yuuki H."/>
            <person name="Oshima A."/>
            <person name="Sasaki N."/>
            <person name="Aotsuka S."/>
            <person name="Yoshikawa Y."/>
            <person name="Matsunawa H."/>
            <person name="Ichihara T."/>
            <person name="Shiohata N."/>
            <person name="Sano S."/>
            <person name="Moriya S."/>
            <person name="Momiyama H."/>
            <person name="Satoh N."/>
            <person name="Takami S."/>
            <person name="Terashima Y."/>
            <person name="Suzuki O."/>
            <person name="Nakagawa S."/>
            <person name="Senoh A."/>
            <person name="Mizoguchi H."/>
            <person name="Goto Y."/>
            <person name="Shimizu F."/>
            <person name="Wakebe H."/>
            <person name="Hishigaki H."/>
            <person name="Watanabe T."/>
            <person name="Sugiyama A."/>
            <person name="Takemoto M."/>
            <person name="Kawakami B."/>
            <person name="Yamazaki M."/>
            <person name="Watanabe K."/>
            <person name="Kumagai A."/>
            <person name="Itakura S."/>
            <person name="Fukuzumi Y."/>
            <person name="Fujimori Y."/>
            <person name="Komiyama M."/>
            <person name="Tashiro H."/>
            <person name="Tanigami A."/>
            <person name="Fujiwara T."/>
            <person name="Ono T."/>
            <person name="Yamada K."/>
            <person name="Fujii Y."/>
            <person name="Ozaki K."/>
            <person name="Hirao M."/>
            <person name="Ohmori Y."/>
            <person name="Kawabata A."/>
            <person name="Hikiji T."/>
            <person name="Kobatake N."/>
            <person name="Inagaki H."/>
            <person name="Ikema Y."/>
            <person name="Okamoto S."/>
            <person name="Okitani R."/>
            <person name="Kawakami T."/>
            <person name="Noguchi S."/>
            <person name="Itoh T."/>
            <person name="Shigeta K."/>
            <person name="Senba T."/>
            <person name="Matsumura K."/>
            <person name="Nakajima Y."/>
            <person name="Mizuno T."/>
            <person name="Morinaga M."/>
            <person name="Sasaki M."/>
            <person name="Togashi T."/>
            <person name="Oyama M."/>
            <person name="Hata H."/>
            <person name="Watanabe M."/>
            <person name="Komatsu T."/>
            <person name="Mizushima-Sugano J."/>
            <person name="Satoh T."/>
            <person name="Shirai Y."/>
            <person name="Takahashi Y."/>
            <person name="Nakagawa K."/>
            <person name="Okumura K."/>
            <person name="Nagase T."/>
            <person name="Nomura N."/>
            <person name="Kikuchi H."/>
            <person name="Masuho Y."/>
            <person name="Yamashita R."/>
            <person name="Nakai K."/>
            <person name="Yada T."/>
            <person name="Nakamura Y."/>
            <person name="Ohara O."/>
            <person name="Isogai T."/>
            <person name="Sugano S."/>
        </authorList>
    </citation>
    <scope>NUCLEOTIDE SEQUENCE [LARGE SCALE MRNA]</scope>
    <source>
        <tissue>Trachea</tissue>
    </source>
</reference>
<reference key="3">
    <citation type="submission" date="2003-03" db="EMBL/GenBank/DDBJ databases">
        <authorList>
            <consortium name="SeattleSNPs variation discovery resource"/>
        </authorList>
    </citation>
    <scope>NUCLEOTIDE SEQUENCE [GENOMIC DNA]</scope>
    <scope>VARIANTS VAL-125; CYS-127 AND PRO-766</scope>
</reference>
<reference key="4">
    <citation type="journal article" date="2003" name="Nature">
        <title>The DNA sequence and analysis of human chromosome 6.</title>
        <authorList>
            <person name="Mungall A.J."/>
            <person name="Palmer S.A."/>
            <person name="Sims S.K."/>
            <person name="Edwards C.A."/>
            <person name="Ashurst J.L."/>
            <person name="Wilming L."/>
            <person name="Jones M.C."/>
            <person name="Horton R."/>
            <person name="Hunt S.E."/>
            <person name="Scott C.E."/>
            <person name="Gilbert J.G.R."/>
            <person name="Clamp M.E."/>
            <person name="Bethel G."/>
            <person name="Milne S."/>
            <person name="Ainscough R."/>
            <person name="Almeida J.P."/>
            <person name="Ambrose K.D."/>
            <person name="Andrews T.D."/>
            <person name="Ashwell R.I.S."/>
            <person name="Babbage A.K."/>
            <person name="Bagguley C.L."/>
            <person name="Bailey J."/>
            <person name="Banerjee R."/>
            <person name="Barker D.J."/>
            <person name="Barlow K.F."/>
            <person name="Bates K."/>
            <person name="Beare D.M."/>
            <person name="Beasley H."/>
            <person name="Beasley O."/>
            <person name="Bird C.P."/>
            <person name="Blakey S.E."/>
            <person name="Bray-Allen S."/>
            <person name="Brook J."/>
            <person name="Brown A.J."/>
            <person name="Brown J.Y."/>
            <person name="Burford D.C."/>
            <person name="Burrill W."/>
            <person name="Burton J."/>
            <person name="Carder C."/>
            <person name="Carter N.P."/>
            <person name="Chapman J.C."/>
            <person name="Clark S.Y."/>
            <person name="Clark G."/>
            <person name="Clee C.M."/>
            <person name="Clegg S."/>
            <person name="Cobley V."/>
            <person name="Collier R.E."/>
            <person name="Collins J.E."/>
            <person name="Colman L.K."/>
            <person name="Corby N.R."/>
            <person name="Coville G.J."/>
            <person name="Culley K.M."/>
            <person name="Dhami P."/>
            <person name="Davies J."/>
            <person name="Dunn M."/>
            <person name="Earthrowl M.E."/>
            <person name="Ellington A.E."/>
            <person name="Evans K.A."/>
            <person name="Faulkner L."/>
            <person name="Francis M.D."/>
            <person name="Frankish A."/>
            <person name="Frankland J."/>
            <person name="French L."/>
            <person name="Garner P."/>
            <person name="Garnett J."/>
            <person name="Ghori M.J."/>
            <person name="Gilby L.M."/>
            <person name="Gillson C.J."/>
            <person name="Glithero R.J."/>
            <person name="Grafham D.V."/>
            <person name="Grant M."/>
            <person name="Gribble S."/>
            <person name="Griffiths C."/>
            <person name="Griffiths M.N.D."/>
            <person name="Hall R."/>
            <person name="Halls K.S."/>
            <person name="Hammond S."/>
            <person name="Harley J.L."/>
            <person name="Hart E.A."/>
            <person name="Heath P.D."/>
            <person name="Heathcott R."/>
            <person name="Holmes S.J."/>
            <person name="Howden P.J."/>
            <person name="Howe K.L."/>
            <person name="Howell G.R."/>
            <person name="Huckle E."/>
            <person name="Humphray S.J."/>
            <person name="Humphries M.D."/>
            <person name="Hunt A.R."/>
            <person name="Johnson C.M."/>
            <person name="Joy A.A."/>
            <person name="Kay M."/>
            <person name="Keenan S.J."/>
            <person name="Kimberley A.M."/>
            <person name="King A."/>
            <person name="Laird G.K."/>
            <person name="Langford C."/>
            <person name="Lawlor S."/>
            <person name="Leongamornlert D.A."/>
            <person name="Leversha M."/>
            <person name="Lloyd C.R."/>
            <person name="Lloyd D.M."/>
            <person name="Loveland J.E."/>
            <person name="Lovell J."/>
            <person name="Martin S."/>
            <person name="Mashreghi-Mohammadi M."/>
            <person name="Maslen G.L."/>
            <person name="Matthews L."/>
            <person name="McCann O.T."/>
            <person name="McLaren S.J."/>
            <person name="McLay K."/>
            <person name="McMurray A."/>
            <person name="Moore M.J.F."/>
            <person name="Mullikin J.C."/>
            <person name="Niblett D."/>
            <person name="Nickerson T."/>
            <person name="Novik K.L."/>
            <person name="Oliver K."/>
            <person name="Overton-Larty E.K."/>
            <person name="Parker A."/>
            <person name="Patel R."/>
            <person name="Pearce A.V."/>
            <person name="Peck A.I."/>
            <person name="Phillimore B.J.C.T."/>
            <person name="Phillips S."/>
            <person name="Plumb R.W."/>
            <person name="Porter K.M."/>
            <person name="Ramsey Y."/>
            <person name="Ranby S.A."/>
            <person name="Rice C.M."/>
            <person name="Ross M.T."/>
            <person name="Searle S.M."/>
            <person name="Sehra H.K."/>
            <person name="Sheridan E."/>
            <person name="Skuce C.D."/>
            <person name="Smith S."/>
            <person name="Smith M."/>
            <person name="Spraggon L."/>
            <person name="Squares S.L."/>
            <person name="Steward C.A."/>
            <person name="Sycamore N."/>
            <person name="Tamlyn-Hall G."/>
            <person name="Tester J."/>
            <person name="Theaker A.J."/>
            <person name="Thomas D.W."/>
            <person name="Thorpe A."/>
            <person name="Tracey A."/>
            <person name="Tromans A."/>
            <person name="Tubby B."/>
            <person name="Wall M."/>
            <person name="Wallis J.M."/>
            <person name="West A.P."/>
            <person name="White S.S."/>
            <person name="Whitehead S.L."/>
            <person name="Whittaker H."/>
            <person name="Wild A."/>
            <person name="Willey D.J."/>
            <person name="Wilmer T.E."/>
            <person name="Wood J.M."/>
            <person name="Wray P.W."/>
            <person name="Wyatt J.C."/>
            <person name="Young L."/>
            <person name="Younger R.M."/>
            <person name="Bentley D.R."/>
            <person name="Coulson A."/>
            <person name="Durbin R.M."/>
            <person name="Hubbard T."/>
            <person name="Sulston J.E."/>
            <person name="Dunham I."/>
            <person name="Rogers J."/>
            <person name="Beck S."/>
        </authorList>
    </citation>
    <scope>NUCLEOTIDE SEQUENCE [LARGE SCALE GENOMIC DNA]</scope>
</reference>
<reference key="5">
    <citation type="submission" date="2005-09" db="EMBL/GenBank/DDBJ databases">
        <authorList>
            <person name="Mural R.J."/>
            <person name="Istrail S."/>
            <person name="Sutton G.G."/>
            <person name="Florea L."/>
            <person name="Halpern A.L."/>
            <person name="Mobarry C.M."/>
            <person name="Lippert R."/>
            <person name="Walenz B."/>
            <person name="Shatkay H."/>
            <person name="Dew I."/>
            <person name="Miller J.R."/>
            <person name="Flanigan M.J."/>
            <person name="Edwards N.J."/>
            <person name="Bolanos R."/>
            <person name="Fasulo D."/>
            <person name="Halldorsson B.V."/>
            <person name="Hannenhalli S."/>
            <person name="Turner R."/>
            <person name="Yooseph S."/>
            <person name="Lu F."/>
            <person name="Nusskern D.R."/>
            <person name="Shue B.C."/>
            <person name="Zheng X.H."/>
            <person name="Zhong F."/>
            <person name="Delcher A.L."/>
            <person name="Huson D.H."/>
            <person name="Kravitz S.A."/>
            <person name="Mouchard L."/>
            <person name="Reinert K."/>
            <person name="Remington K.A."/>
            <person name="Clark A.G."/>
            <person name="Waterman M.S."/>
            <person name="Eichler E.E."/>
            <person name="Adams M.D."/>
            <person name="Hunkapiller M.W."/>
            <person name="Myers E.W."/>
            <person name="Venter J.C."/>
        </authorList>
    </citation>
    <scope>NUCLEOTIDE SEQUENCE [LARGE SCALE GENOMIC DNA]</scope>
</reference>
<reference key="6">
    <citation type="journal article" date="2004" name="Genome Res.">
        <title>The status, quality, and expansion of the NIH full-length cDNA project: the Mammalian Gene Collection (MGC).</title>
        <authorList>
            <consortium name="The MGC Project Team"/>
        </authorList>
    </citation>
    <scope>NUCLEOTIDE SEQUENCE [LARGE SCALE MRNA]</scope>
</reference>
<reference key="7">
    <citation type="journal article" date="2007" name="BMC Genomics">
        <title>The full-ORF clone resource of the German cDNA consortium.</title>
        <authorList>
            <person name="Bechtel S."/>
            <person name="Rosenfelder H."/>
            <person name="Duda A."/>
            <person name="Schmidt C.P."/>
            <person name="Ernst U."/>
            <person name="Wellenreuther R."/>
            <person name="Mehrle A."/>
            <person name="Schuster C."/>
            <person name="Bahr A."/>
            <person name="Bloecker H."/>
            <person name="Heubner D."/>
            <person name="Hoerlein A."/>
            <person name="Michel G."/>
            <person name="Wedler H."/>
            <person name="Koehrer K."/>
            <person name="Ottenwaelder B."/>
            <person name="Poustka A."/>
            <person name="Wiemann S."/>
            <person name="Schupp I."/>
        </authorList>
    </citation>
    <scope>NUCLEOTIDE SEQUENCE [LARGE SCALE MRNA] OF 155-790</scope>
    <source>
        <tissue>Testis</tissue>
    </source>
</reference>
<reference key="8">
    <citation type="journal article" date="1996" name="Proc. Natl. Acad. Sci. U.S.A.">
        <title>The tumor necrosis factor-inducible zinc finger protein A20 interacts with TRAF1/TRAF2 and inhibits NF-kappaB activation.</title>
        <authorList>
            <person name="Song H.Y."/>
            <person name="Rothe M."/>
            <person name="Goeddel D.V."/>
        </authorList>
    </citation>
    <scope>FUNCTION</scope>
    <scope>INTERACTION WITH TRAF1 AND TRAF2</scope>
</reference>
<reference key="9">
    <citation type="journal article" date="1997" name="Biochem. Biophys. Res. Commun.">
        <title>A20 inhibits NF-kappaB activation independently of binding to 14-3-3 proteins.</title>
        <authorList>
            <person name="De Valck D."/>
            <person name="Heyninck K."/>
            <person name="Van Criekinge W."/>
            <person name="Vandenabeele P."/>
            <person name="Fiers W."/>
            <person name="Beyaert R."/>
        </authorList>
    </citation>
    <scope>FUNCTION</scope>
    <scope>INTERACTION WITH YWHAZ AND YWHAH</scope>
    <scope>MUTAGENESIS OF ARG-562 AND SER-565</scope>
</reference>
<reference key="10">
    <citation type="journal article" date="1999" name="J. Virol.">
        <title>Epstein-Barr virus-encoded latent membrane protein 1 activates the JNK pathway through its extreme C-terminus via a mechanism involving TRADD and TRAF2.</title>
        <authorList>
            <person name="Eliopoulos A.G."/>
            <person name="Blake S.M."/>
            <person name="Floettmann J.E."/>
            <person name="Rowe M."/>
            <person name="Young L.S."/>
        </authorList>
    </citation>
    <scope>FUNCTION</scope>
    <scope>INTERACTION WITH TRAF2</scope>
</reference>
<reference key="11">
    <citation type="journal article" date="1999" name="Oncogene">
        <title>The zinc finger protein A20 interacts with a novel anti-apoptotic protein which is cleaved by specific caspases.</title>
        <authorList>
            <person name="de Valck D."/>
            <person name="Jin D.-Y."/>
            <person name="Heyninck K."/>
            <person name="van de Craen M."/>
            <person name="Contreras R."/>
            <person name="Fiers W."/>
            <person name="Jeang K.-T."/>
            <person name="Beyaert R."/>
        </authorList>
    </citation>
    <scope>INTERACTION WITH TAX1BP1</scope>
</reference>
<reference key="12">
    <citation type="journal article" date="2001" name="Biochem. J.">
        <title>Isolation and characterization of two novel A20-like proteins.</title>
        <authorList>
            <person name="Evans P.C."/>
            <person name="Taylor E.R."/>
            <person name="Coadwell J."/>
            <person name="Heyninck K."/>
            <person name="Beyaert R."/>
            <person name="Kilshaw P.J."/>
        </authorList>
    </citation>
    <scope>SUBCELLULAR LOCATION</scope>
</reference>
<reference key="13">
    <citation type="journal article" date="2004" name="Biochem. J.">
        <title>Zinc-finger protein A20, a regulator of inflammation and cell survival, has de-ubiquitinating activity.</title>
        <authorList>
            <person name="Evans P.C."/>
            <person name="Ovaa H."/>
            <person name="Hamon M."/>
            <person name="Kilshaw P.J."/>
            <person name="Hamm S."/>
            <person name="Bauer S."/>
            <person name="Ploegh H.L."/>
            <person name="Smith T.S."/>
        </authorList>
    </citation>
    <scope>FUNCTION</scope>
    <scope>MUTAGENESIS OF CYS-103</scope>
    <scope>CATALYTIC ACTIVITY</scope>
</reference>
<reference key="14">
    <citation type="journal article" date="2004" name="Nature">
        <title>De-ubiquitination and ubiquitin ligase domains of A20 downregulate NF-kappaB signalling.</title>
        <authorList>
            <person name="Wertz I.E."/>
            <person name="O'Rourke K.M."/>
            <person name="Zhou H."/>
            <person name="Eby M."/>
            <person name="Aravind L."/>
            <person name="Seshagiri S."/>
            <person name="Wu P."/>
            <person name="Wiesmann C."/>
            <person name="Baker R."/>
            <person name="Boone D.L."/>
            <person name="Ma A."/>
            <person name="Koonin E.V."/>
            <person name="Dixit V.M."/>
        </authorList>
    </citation>
    <scope>FUNCTION</scope>
    <scope>DOMAIN OTU</scope>
    <scope>DOMAIN A20-TYPE ZINC-FINGER</scope>
    <scope>MUTAGENESIS OF CYS-103; CYS-521; CYS-524; CYS-624 AND CYS-627</scope>
</reference>
<reference key="15">
    <citation type="journal article" date="2006" name="Cell">
        <title>Global, in vivo, and site-specific phosphorylation dynamics in signaling networks.</title>
        <authorList>
            <person name="Olsen J.V."/>
            <person name="Blagoev B."/>
            <person name="Gnad F."/>
            <person name="Macek B."/>
            <person name="Kumar C."/>
            <person name="Mortensen P."/>
            <person name="Mann M."/>
        </authorList>
    </citation>
    <scope>IDENTIFICATION BY MASS SPECTROMETRY [LARGE SCALE ANALYSIS]</scope>
    <source>
        <tissue>Cervix carcinoma</tissue>
    </source>
</reference>
<reference key="16">
    <citation type="journal article" date="2006" name="J. Biol. Chem.">
        <title>ABIN-1 binds to NEMO/IKKgamma and co-operates with A20 in inhibiting NF-kappaB.</title>
        <authorList>
            <person name="Mauro C."/>
            <person name="Pacifico F."/>
            <person name="Lavorgna A."/>
            <person name="Mellone S."/>
            <person name="Iannetti A."/>
            <person name="Acquaviva R."/>
            <person name="Formisano S."/>
            <person name="Vito P."/>
            <person name="Leonardi A."/>
        </authorList>
    </citation>
    <scope>FUNCTION</scope>
    <scope>INTERACTION WITH IKBKG AND TNIP1</scope>
</reference>
<reference key="17">
    <citation type="journal article" date="2008" name="Nat. Immunol.">
        <title>T cell antigen receptor stimulation induces MALT1 paracaspase-mediated cleavage of the NF-kappaB inhibitor A20.</title>
        <authorList>
            <person name="Coornaert B."/>
            <person name="Baens M."/>
            <person name="Heyninck K."/>
            <person name="Bekaert T."/>
            <person name="Haegman M."/>
            <person name="Staal J."/>
            <person name="Sun L."/>
            <person name="Chen Z.J."/>
            <person name="Marynen P."/>
            <person name="Beyaert R."/>
        </authorList>
    </citation>
    <scope>PROTEOLYTIC CLEAVAGE</scope>
</reference>
<reference key="18">
    <citation type="journal article" date="2008" name="Proc. Natl. Acad. Sci. U.S.A.">
        <title>A quantitative atlas of mitotic phosphorylation.</title>
        <authorList>
            <person name="Dephoure N."/>
            <person name="Zhou C."/>
            <person name="Villen J."/>
            <person name="Beausoleil S.A."/>
            <person name="Bakalarski C.E."/>
            <person name="Elledge S.J."/>
            <person name="Gygi S.P."/>
        </authorList>
    </citation>
    <scope>IDENTIFICATION BY MASS SPECTROMETRY [LARGE SCALE ANALYSIS]</scope>
    <source>
        <tissue>Cervix carcinoma</tissue>
    </source>
</reference>
<reference key="19">
    <citation type="journal article" date="2009" name="Biochim. Biophys. Acta">
        <title>The zinc finger protein A20 targets TRAF2 to the lysosomes for degradation.</title>
        <authorList>
            <person name="Li L."/>
            <person name="Soetandyo N."/>
            <person name="Wang Q."/>
            <person name="Ye Y."/>
        </authorList>
    </citation>
    <scope>FUNCTION</scope>
    <scope>SUBCELLULAR LOCATION</scope>
</reference>
<reference key="20">
    <citation type="journal article" date="2009" name="EMBO J.">
        <title>The ubiquitin-editing enzyme A20 requires RNF11 to downregulate NF-kappaB signalling.</title>
        <authorList>
            <person name="Shembade N."/>
            <person name="Parvatiyar K."/>
            <person name="Harhaj N.S."/>
            <person name="Harhaj E.W."/>
        </authorList>
    </citation>
    <scope>INTERACTION WITH TAX1BP1; RNF11 AND RIPK1</scope>
</reference>
<reference key="21">
    <citation type="journal article" date="2009" name="J. Immunol.">
        <title>A20 negatively regulates T cell receptor signaling to NF-kappaB by cleaving Malt1 ubiquitin chains.</title>
        <authorList>
            <person name="Duwel M."/>
            <person name="Welteke V."/>
            <person name="Oeckinghaus A."/>
            <person name="Baens M."/>
            <person name="Kloo B."/>
            <person name="Ferch U."/>
            <person name="Darnay B.G."/>
            <person name="Ruland J."/>
            <person name="Marynen P."/>
            <person name="Krappmann D."/>
        </authorList>
    </citation>
    <scope>FUNCTION</scope>
</reference>
<reference key="22">
    <citation type="journal article" date="2009" name="Sci. Signal.">
        <title>Quantitative phosphoproteomic analysis of T cell receptor signaling reveals system-wide modulation of protein-protein interactions.</title>
        <authorList>
            <person name="Mayya V."/>
            <person name="Lundgren D.H."/>
            <person name="Hwang S.-I."/>
            <person name="Rezaul K."/>
            <person name="Wu L."/>
            <person name="Eng J.K."/>
            <person name="Rodionov V."/>
            <person name="Han D.K."/>
        </authorList>
    </citation>
    <scope>PHOSPHORYLATION [LARGE SCALE ANALYSIS] AT SER-459</scope>
    <scope>IDENTIFICATION BY MASS SPECTROMETRY [LARGE SCALE ANALYSIS]</scope>
    <source>
        <tissue>Leukemic T-cell</tissue>
    </source>
</reference>
<reference key="23">
    <citation type="journal article" date="2010" name="Biochem. Biophys. Res. Commun.">
        <title>Cleavage by MALT1 induces cytosolic release of A20.</title>
        <authorList>
            <person name="Malinverni C."/>
            <person name="Unterreiner A."/>
            <person name="Staal J."/>
            <person name="Demeyer A."/>
            <person name="Galaup M."/>
            <person name="Luyten M."/>
            <person name="Beyaert R."/>
            <person name="Bornancin F."/>
        </authorList>
    </citation>
    <scope>PROTEOLYTIC CLEAVAGE</scope>
    <scope>SUBCELLULAR LOCATION</scope>
</reference>
<reference key="24">
    <citation type="journal article" date="2011" name="Mol. Cell">
        <title>Direct, noncatalytic mechanism of IKK inhibition by A20.</title>
        <authorList>
            <person name="Skaug B."/>
            <person name="Chen J."/>
            <person name="Du F."/>
            <person name="He J."/>
            <person name="Ma A."/>
            <person name="Chen Z.J."/>
        </authorList>
    </citation>
    <scope>FUNCTION</scope>
    <scope>INTERACTION WITH IKBKG</scope>
    <scope>MUTAGENESIS OF 770-PHE-GLY-771; CYS-779 AND CYS-782</scope>
</reference>
<reference key="25">
    <citation type="journal article" date="2012" name="Proc. Natl. Acad. Sci. U.S.A.">
        <title>N-terminal acetylome analyses and functional insights of the N-terminal acetyltransferase NatB.</title>
        <authorList>
            <person name="Van Damme P."/>
            <person name="Lasa M."/>
            <person name="Polevoda B."/>
            <person name="Gazquez C."/>
            <person name="Elosegui-Artola A."/>
            <person name="Kim D.S."/>
            <person name="De Juan-Pardo E."/>
            <person name="Demeyer K."/>
            <person name="Hole K."/>
            <person name="Larrea E."/>
            <person name="Timmerman E."/>
            <person name="Prieto J."/>
            <person name="Arnesen T."/>
            <person name="Sherman F."/>
            <person name="Gevaert K."/>
            <person name="Aldabe R."/>
        </authorList>
    </citation>
    <scope>ACETYLATION [LARGE SCALE ANALYSIS] AT ALA-2</scope>
    <scope>CLEAVAGE OF INITIATOR METHIONINE [LARGE SCALE ANALYSIS]</scope>
    <scope>IDENTIFICATION BY MASS SPECTROMETRY [LARGE SCALE ANALYSIS]</scope>
</reference>
<reference key="26">
    <citation type="journal article" date="2013" name="Cell">
        <title>OTU deubiquitinases reveal mechanisms of linkage specificity and enable ubiquitin chain restriction analysis.</title>
        <authorList>
            <person name="Mevissen T.E."/>
            <person name="Hospenthal M.K."/>
            <person name="Geurink P.P."/>
            <person name="Elliott P.R."/>
            <person name="Akutsu M."/>
            <person name="Arnaudo N."/>
            <person name="Ekkebus R."/>
            <person name="Kulathu Y."/>
            <person name="Wauer T."/>
            <person name="El Oualid F."/>
            <person name="Freund S.M."/>
            <person name="Ovaa H."/>
            <person name="Komander D."/>
        </authorList>
    </citation>
    <scope>FUNCTION</scope>
    <scope>CATALYTIC ACTIVITY</scope>
</reference>
<reference key="27">
    <citation type="journal article" date="2013" name="J. Proteome Res.">
        <title>Toward a comprehensive characterization of a human cancer cell phosphoproteome.</title>
        <authorList>
            <person name="Zhou H."/>
            <person name="Di Palma S."/>
            <person name="Preisinger C."/>
            <person name="Peng M."/>
            <person name="Polat A.N."/>
            <person name="Heck A.J."/>
            <person name="Mohammed S."/>
        </authorList>
    </citation>
    <scope>PHOSPHORYLATION [LARGE SCALE ANALYSIS] AT SER-645</scope>
    <scope>IDENTIFICATION BY MASS SPECTROMETRY [LARGE SCALE ANALYSIS]</scope>
    <source>
        <tissue>Erythroleukemia</tissue>
    </source>
</reference>
<reference key="28">
    <citation type="journal article" date="2014" name="J. Proteomics">
        <title>An enzyme assisted RP-RPLC approach for in-depth analysis of human liver phosphoproteome.</title>
        <authorList>
            <person name="Bian Y."/>
            <person name="Song C."/>
            <person name="Cheng K."/>
            <person name="Dong M."/>
            <person name="Wang F."/>
            <person name="Huang J."/>
            <person name="Sun D."/>
            <person name="Wang L."/>
            <person name="Ye M."/>
            <person name="Zou H."/>
        </authorList>
    </citation>
    <scope>PHOSPHORYLATION [LARGE SCALE ANALYSIS] AT SER-575</scope>
    <scope>IDENTIFICATION BY MASS SPECTROMETRY [LARGE SCALE ANALYSIS]</scope>
    <source>
        <tissue>Liver</tissue>
    </source>
</reference>
<reference key="29">
    <citation type="journal article" date="2016" name="Nat. Genet.">
        <title>Loss-of-function mutations in TNFAIP3 leading to A20 haploinsufficiency cause an early-onset autoinflammatory disease.</title>
        <authorList>
            <person name="Zhou Q."/>
            <person name="Wang H."/>
            <person name="Schwartz D.M."/>
            <person name="Stoffels M."/>
            <person name="Park Y.H."/>
            <person name="Zhang Y."/>
            <person name="Yang D."/>
            <person name="Demirkaya E."/>
            <person name="Takeuchi M."/>
            <person name="Tsai W.L."/>
            <person name="Lyons J.J."/>
            <person name="Yu X."/>
            <person name="Ouyang C."/>
            <person name="Chen C."/>
            <person name="Chin D.T."/>
            <person name="Zaal K."/>
            <person name="Chandrasekharappa S.C."/>
            <person name="P Hanson E."/>
            <person name="Yu Z."/>
            <person name="Mullikin J.C."/>
            <person name="Hasni S.A."/>
            <person name="Wertz I.E."/>
            <person name="Ombrello A.K."/>
            <person name="Stone D.L."/>
            <person name="Hoffmann P."/>
            <person name="Jones A."/>
            <person name="Barham B.K."/>
            <person name="Leavis H.L."/>
            <person name="van Royen-Kerkof A."/>
            <person name="Sibley C."/>
            <person name="Batu E.D."/>
            <person name="Guel A."/>
            <person name="Siegel R.M."/>
            <person name="Boehm M."/>
            <person name="Milner J.D."/>
            <person name="Ozen S."/>
            <person name="Gadina M."/>
            <person name="Chae J."/>
            <person name="Laxer R.M."/>
            <person name="Kastner D.L."/>
            <person name="Aksentijevich I."/>
        </authorList>
    </citation>
    <scope>INVOLVEMENT IN AIFBL1</scope>
</reference>
<reference key="30">
    <citation type="submission" date="2007-10" db="PDB data bank">
        <title>Solution structure of the A20-type zinc finger domains from human tumor necrosis factor, alpha-induced protein 3.</title>
        <authorList>
            <consortium name="RIKEN structural genomics initiative (RSGI)"/>
        </authorList>
    </citation>
    <scope>STRUCTURE BY NMR OF 381-790</scope>
</reference>
<reference key="31">
    <citation type="journal article" date="2008" name="Biochem. J.">
        <title>Structure of the A20 OTU domain and mechanistic insights into deubiquitination.</title>
        <authorList>
            <person name="Komander D."/>
            <person name="Barford D."/>
        </authorList>
    </citation>
    <scope>X-RAY CRYSTALLOGRAPHY (3.2 ANGSTROMS) OF 1-366</scope>
    <scope>CATALYTIC ACTIVITY</scope>
    <scope>FUNCTION</scope>
    <scope>MUTAGENESIS OF ASP-70; CYS-103 AND HIS-256</scope>
</reference>
<reference key="32">
    <citation type="journal article" date="2008" name="J. Mol. Biol.">
        <title>Molecular basis for the unique deubiquitinating activity of the NF-kappaB inhibitor A20.</title>
        <authorList>
            <person name="Lin S.C."/>
            <person name="Chung J.Y."/>
            <person name="Lamothe B."/>
            <person name="Rajashankar K."/>
            <person name="Lu M."/>
            <person name="Lo Y.C."/>
            <person name="Lam A.Y."/>
            <person name="Darnay B.G."/>
            <person name="Wu H."/>
        </authorList>
    </citation>
    <scope>X-RAY CRYSTALLOGRAPHY (2.5 ANGSTROMS) OF 1-370</scope>
    <scope>ACTIVE SITE</scope>
    <scope>CATALYTIC ACTIVITY</scope>
    <scope>FUNCTION</scope>
    <scope>MUTAGENESIS OF ASP-70; THR-97; ASP-100; CYS-103; LEU-157; TYR-159; SER-190; GLU-192; PHE-224 AND LEU-227</scope>
</reference>
<reference key="33">
    <citation type="journal article" date="2010" name="Mol. Cell">
        <title>Ubiquitin binding to A20 ZnF4 is required for modulation of NF-kappaB signaling.</title>
        <authorList>
            <person name="Bosanac I."/>
            <person name="Wertz I.E."/>
            <person name="Pan B."/>
            <person name="Yu C."/>
            <person name="Kusam S."/>
            <person name="Lam C."/>
            <person name="Phu L."/>
            <person name="Phung Q."/>
            <person name="Maurer B."/>
            <person name="Arnott D."/>
            <person name="Kirkpatrick D.S."/>
            <person name="Dixit V.M."/>
            <person name="Hymowitz S.G."/>
        </authorList>
    </citation>
    <scope>X-RAY CRYSTALLOGRAPHY (2.5 ANGSTROMS) OF 592-635 IN COMPLEX WITH UBIQUITIN</scope>
    <scope>X-RAY CRYSTALLOGRAPHY (3.4 ANGSTROMS) OF 592-635 IN COMPLEX WITH UBIQUITIN AND UBE2D1</scope>
    <scope>MUTAGENESIS OF TYR-614; PHE-615 AND LEU-626</scope>
</reference>
<reference evidence="28" key="34">
    <citation type="journal article" date="2016" name="Nature">
        <title>Molecular basis of Lys11-polyubiquitin specificity in the deubiquitinase Cezanne.</title>
        <authorList>
            <person name="Mevissen T.E."/>
            <person name="Kulathu Y."/>
            <person name="Mulder M.P."/>
            <person name="Geurink P.P."/>
            <person name="Maslen S.L."/>
            <person name="Gersch M."/>
            <person name="Elliott P.R."/>
            <person name="Burke J.E."/>
            <person name="van Tol B.D."/>
            <person name="Akutsu M."/>
            <person name="El Oualid F."/>
            <person name="Kawasaki M."/>
            <person name="Freund S.M."/>
            <person name="Ovaa H."/>
            <person name="Komander D."/>
        </authorList>
    </citation>
    <scope>X-RAY CRYSTALLOGRAPHY (2.85 ANGSTROMS) OF 1-366</scope>
    <scope>CATALYTIC ACTIVITY</scope>
    <scope>MUTAGENESIS OF HIS-106 AND HIS-256</scope>
</reference>
<reference key="35">
    <citation type="journal article" date="2016" name="RMD Open">
        <title>Novel heterozygous C243Y A20/TNFAIP3 gene mutation is responsible for chronic inflammation in autosomal-dominant Behcet's disease.</title>
        <authorList>
            <person name="Shigemura T."/>
            <person name="Kaneko N."/>
            <person name="Kobayashi N."/>
            <person name="Kobayashi K."/>
            <person name="Takeuchi Y."/>
            <person name="Nakano N."/>
            <person name="Masumoto J."/>
            <person name="Agematsu K."/>
        </authorList>
    </citation>
    <scope>VARIANT AIFBL1 TYR-243</scope>
    <scope>CHARACTERIZATION OF VARIANT AIFBL1 TYR-243</scope>
</reference>
<gene>
    <name type="primary">TNFAIP3</name>
    <name type="synonym">OTUD7C</name>
</gene>
<accession>P21580</accession>
<accession>B2R767</accession>
<accession>E1P588</accession>
<accession>Q2HIX9</accession>
<accession>Q5VXQ7</accession>
<accession>Q9NSR6</accession>
<comment type="function">
    <text evidence="6 7 8 9 10 12 14 17 18 22 23 24">Ubiquitin-editing enzyme that contains both ubiquitin ligase and deubiquitinase activities. Involved in immune and inflammatory responses signaled by cytokines, such as TNF-alpha and IL-1 beta, or pathogens via Toll-like receptors (TLRs) through terminating NF-kappa-B activity. Essential component of a ubiquitin-editing protein complex, comprising also RNF11, ITCH and TAX1BP1, that ensures the transient nature of inflammatory signaling pathways. In cooperation with TAX1BP1 promotes disassembly of E2-E3 ubiquitin protein ligase complexes in IL-1R and TNFR-1 pathways; affected are at least E3 ligases TRAF6, TRAF2 and BIRC2, and E2 ubiquitin-conjugating enzymes UBE2N and UBE2D3. In cooperation with TAX1BP1 promotes ubiquitination of UBE2N and proteasomal degradation of UBE2N and UBE2D3. Upon TNF stimulation, deubiquitinates 'Lys-63'-polyubiquitin chains on RIPK1 and catalyzes the formation of 'Lys-48'-polyubiquitin chains. This leads to RIPK1 proteasomal degradation and consequently termination of the TNF- or LPS-mediated activation of NF-kappa-B. Deubiquitinates TRAF6 probably acting on 'Lys-63'-linked polyubiquitin. Upon T-cell receptor (TCR)-mediated T-cell activation, deubiquitinates 'Lys-63'-polyubiquitin chains on MALT1 thereby mediating disassociation of the CBM (CARD11:BCL10:MALT1) and IKK complexes and preventing sustained IKK activation. Deubiquitinates NEMO/IKBKG; the function is facilitated by TNIP1 and leads to inhibition of NF-kappa-B activation. Upon stimulation by bacterial peptidoglycans, probably deubiquitinates RIPK2. Can also inhibit I-kappa-B-kinase (IKK) through a non-catalytic mechanism which involves polyubiquitin; polyubiquitin promotes association with IKBKG and prevents IKK MAP3K7-mediated phosphorylation. Targets TRAF2 for lysosomal degradation. In vitro able to deubiquitinate 'Lys-11'-, 'Lys-48'- and 'Lys-63' polyubiquitin chains. Inhibitor of programmed cell death. Has a role in the function of the lymphoid system. Required for LPS-induced production of pro-inflammatory cytokines and IFN beta in LPS-tolerized macrophages.</text>
</comment>
<comment type="catalytic activity">
    <reaction evidence="6 9 10 18 21">
        <text>Thiol-dependent hydrolysis of ester, thioester, amide, peptide and isopeptide bonds formed by the C-terminal Gly of ubiquitin (a 76-residue protein attached to proteins as an intracellular targeting signal).</text>
        <dbReference type="EC" id="3.4.19.12"/>
    </reaction>
</comment>
<comment type="subunit">
    <text evidence="1 5 8 13 16 17 22 23 24">Homodimer. Interacts with TNIP1, TAX1BP1 and TRAF2. Interacts with RNF11, ITCH and TAX1BP1 only after TNF stimulation; these interaction are transient and they are lost after 1 hour of stimulation with TNF (By similarity). Interacts with YWHAZ and YWHAH. Interacts with IKBKG; the interaction is induced by TNF stimulation and by polyubiquitin. Interacts with RIPK1. Interacts with UBE2N; the interaction requires TAX1BP1. Interacts with TRAF6; the interaction is inhibited by HTLV-1 protein Tax.</text>
</comment>
<comment type="interaction">
    <interactant intactId="EBI-527670">
        <id>P21580</id>
    </interactant>
    <interactant intactId="EBI-2875665">
        <id>Q96B67</id>
        <label>ARRDC3</label>
    </interactant>
    <organismsDiffer>false</organismsDiffer>
    <experiments>6</experiments>
</comment>
<comment type="interaction">
    <interactant intactId="EBI-527670">
        <id>P21580</id>
    </interactant>
    <interactant intactId="EBI-52363471">
        <id>Q676U5-1</id>
        <label>ATG16L1</label>
    </interactant>
    <organismsDiffer>false</organismsDiffer>
    <experiments>3</experiments>
</comment>
<comment type="interaction">
    <interactant intactId="EBI-527670">
        <id>P21580</id>
    </interactant>
    <interactant intactId="EBI-78060">
        <id>Q14790</id>
        <label>CASP8</label>
    </interactant>
    <organismsDiffer>false</organismsDiffer>
    <experiments>3</experiments>
</comment>
<comment type="interaction">
    <interactant intactId="EBI-527670">
        <id>P21580</id>
    </interactant>
    <interactant intactId="EBI-1052570">
        <id>O95995</id>
        <label>GAS8</label>
    </interactant>
    <organismsDiffer>false</organismsDiffer>
    <experiments>3</experiments>
</comment>
<comment type="interaction">
    <interactant intactId="EBI-527670">
        <id>P21580</id>
    </interactant>
    <interactant intactId="EBI-81279">
        <id>Q9Y6K9</id>
        <label>IKBKG</label>
    </interactant>
    <organismsDiffer>false</organismsDiffer>
    <experiments>5</experiments>
</comment>
<comment type="interaction">
    <interactant intactId="EBI-527670">
        <id>P21580</id>
    </interactant>
    <interactant intactId="EBI-739832">
        <id>Q8TBB1</id>
        <label>LNX1</label>
    </interactant>
    <organismsDiffer>false</organismsDiffer>
    <experiments>3</experiments>
</comment>
<comment type="interaction">
    <interactant intactId="EBI-527670">
        <id>P21580</id>
    </interactant>
    <interactant intactId="EBI-14066006">
        <id>Q4G0R1</id>
        <label>PIBF1</label>
    </interactant>
    <organismsDiffer>false</organismsDiffer>
    <experiments>3</experiments>
</comment>
<comment type="interaction">
    <interactant intactId="EBI-527670">
        <id>P21580</id>
    </interactant>
    <interactant intactId="EBI-746453">
        <id>P54725</id>
        <label>RAD23A</label>
    </interactant>
    <organismsDiffer>false</organismsDiffer>
    <experiments>3</experiments>
</comment>
<comment type="interaction">
    <interactant intactId="EBI-527670">
        <id>P21580</id>
    </interactant>
    <interactant intactId="EBI-396669">
        <id>Q9Y3C5</id>
        <label>RNF11</label>
    </interactant>
    <organismsDiffer>false</organismsDiffer>
    <experiments>2</experiments>
</comment>
<comment type="interaction">
    <interactant intactId="EBI-527670">
        <id>P21580</id>
    </interactant>
    <interactant intactId="EBI-723313">
        <id>Q9NWF9</id>
        <label>RNF216</label>
    </interactant>
    <organismsDiffer>false</organismsDiffer>
    <experiments>3</experiments>
</comment>
<comment type="interaction">
    <interactant intactId="EBI-527670">
        <id>P21580</id>
    </interactant>
    <interactant intactId="EBI-529518">
        <id>Q86VP1</id>
        <label>TAX1BP1</label>
    </interactant>
    <organismsDiffer>false</organismsDiffer>
    <experiments>6</experiments>
</comment>
<comment type="interaction">
    <interactant intactId="EBI-527670">
        <id>P21580</id>
    </interactant>
    <interactant intactId="EBI-527670">
        <id>P21580</id>
        <label>TNFAIP3</label>
    </interactant>
    <organismsDiffer>false</organismsDiffer>
    <experiments>8</experiments>
</comment>
<comment type="interaction">
    <interactant intactId="EBI-527670">
        <id>P21580</id>
    </interactant>
    <interactant intactId="EBI-357849">
        <id>Q15025</id>
        <label>TNIP1</label>
    </interactant>
    <organismsDiffer>false</organismsDiffer>
    <experiments>11</experiments>
</comment>
<comment type="interaction">
    <interactant intactId="EBI-527670">
        <id>P21580</id>
    </interactant>
    <interactant intactId="EBI-359372">
        <id>Q8NFZ5</id>
        <label>TNIP2</label>
    </interactant>
    <organismsDiffer>false</organismsDiffer>
    <experiments>4</experiments>
</comment>
<comment type="interaction">
    <interactant intactId="EBI-527670">
        <id>P21580</id>
    </interactant>
    <interactant intactId="EBI-2509913">
        <id>Q96KP6</id>
        <label>TNIP3</label>
    </interactant>
    <organismsDiffer>false</organismsDiffer>
    <experiments>3</experiments>
</comment>
<comment type="interaction">
    <interactant intactId="EBI-527670">
        <id>P21580</id>
    </interactant>
    <interactant intactId="EBI-355744">
        <id>Q12933</id>
        <label>TRAF2</label>
    </interactant>
    <organismsDiffer>false</organismsDiffer>
    <experiments>10</experiments>
</comment>
<comment type="interaction">
    <interactant intactId="EBI-527670">
        <id>P21580</id>
    </interactant>
    <interactant intactId="EBI-740098">
        <id>P36406</id>
        <label>TRIM23</label>
    </interactant>
    <organismsDiffer>false</organismsDiffer>
    <experiments>6</experiments>
</comment>
<comment type="interaction">
    <interactant intactId="EBI-527670">
        <id>P21580</id>
    </interactant>
    <interactant intactId="EBI-356498">
        <id>P62258</id>
        <label>YWHAE</label>
    </interactant>
    <organismsDiffer>false</organismsDiffer>
    <experiments>3</experiments>
</comment>
<comment type="interaction">
    <interactant intactId="EBI-527670">
        <id>P21580</id>
    </interactant>
    <interactant intactId="EBI-359832">
        <id>P61981</id>
        <label>YWHAG</label>
    </interactant>
    <organismsDiffer>false</organismsDiffer>
    <experiments>4</experiments>
</comment>
<comment type="interaction">
    <interactant intactId="EBI-527670">
        <id>P21580</id>
    </interactant>
    <interactant intactId="EBI-444641">
        <id>P68510</id>
        <label>Ywhah</label>
    </interactant>
    <organismsDiffer>true</organismsDiffer>
    <experiments>3</experiments>
</comment>
<comment type="subcellular location">
    <subcellularLocation>
        <location>Cytoplasm</location>
    </subcellularLocation>
    <subcellularLocation>
        <location>Nucleus</location>
    </subcellularLocation>
    <subcellularLocation>
        <location>Lysosome</location>
    </subcellularLocation>
</comment>
<comment type="subcellular location">
    <molecule>A20p50</molecule>
    <subcellularLocation>
        <location>Cytoplasm</location>
    </subcellularLocation>
</comment>
<comment type="induction">
    <text>By TNF.</text>
</comment>
<comment type="domain">
    <text evidence="7">The A20-type zinc fingers mediate the ubiquitin ligase activity. The A20-type zinc finger 4 selectively recognizes 'Lys-63'-linked polyubiquitin. The A20-type zinc finger 4-7 are sufficient to bind polyubiquitin.</text>
</comment>
<comment type="domain">
    <text evidence="7">The OTU domain mediates the deubiquitinase activity.</text>
</comment>
<comment type="PTM">
    <text evidence="11 15">Proteolytically cleaved by MALT1 upon TCR stimulation; disrupts NF-kappa-B inhibitory function and results in increased IL-2 production. It is proposed that only a fraction of TNFAIP3 colocalized with TCR and CBM complex is cleaved, leaving the main TNFAIP3 pool intact.</text>
</comment>
<comment type="disease" evidence="19 20">
    <disease id="DI-04635">
        <name>Autoinflammatory syndrome, familial, Behcet-like 1</name>
        <acronym>AIFBL1</acronym>
        <description>An autosomal dominant, autoinflammatory disorder with early onset, characterized by ulceration of mucosal surfaces, particularly in the oral and genital areas. Additional variable features include skin rash, uveitis, and polyarthritis.</description>
        <dbReference type="MIM" id="616744"/>
    </disease>
    <text>The disease is caused by variants affecting the gene represented in this entry.</text>
</comment>
<comment type="similarity">
    <text evidence="26">Belongs to the peptidase C64 family.</text>
</comment>
<comment type="online information" name="Atlas of Genetics and Cytogenetics in Oncology and Haematology">
    <link uri="https://atlasgeneticsoncology.org/gene/42600/TNFAIP3"/>
</comment>
<feature type="initiator methionine" description="Removed" evidence="30">
    <location>
        <position position="1"/>
    </location>
</feature>
<feature type="chain" id="PRO_0000188791" description="Tumor necrosis factor alpha-induced protein 3">
    <location>
        <begin position="2"/>
        <end position="790"/>
    </location>
</feature>
<feature type="chain" id="PRO_0000418127" description="A20p50">
    <location>
        <begin position="2"/>
        <end position="439"/>
    </location>
</feature>
<feature type="chain" id="PRO_0000418128" description="A20p37">
    <location>
        <begin position="440"/>
        <end position="790"/>
    </location>
</feature>
<feature type="domain" description="OTU" evidence="2">
    <location>
        <begin position="92"/>
        <end position="263"/>
    </location>
</feature>
<feature type="zinc finger region" description="A20-type 1" evidence="3">
    <location>
        <begin position="381"/>
        <end position="416"/>
    </location>
</feature>
<feature type="zinc finger region" description="A20-type 2" evidence="3">
    <location>
        <begin position="472"/>
        <end position="507"/>
    </location>
</feature>
<feature type="zinc finger region" description="A20-type 3" evidence="3">
    <location>
        <begin position="515"/>
        <end position="548"/>
    </location>
</feature>
<feature type="zinc finger region" description="A20-type 4" evidence="3">
    <location>
        <begin position="601"/>
        <end position="636"/>
    </location>
</feature>
<feature type="zinc finger region" description="A20-type 5" evidence="3">
    <location>
        <begin position="651"/>
        <end position="686"/>
    </location>
</feature>
<feature type="zinc finger region" description="A20-type 6" evidence="3">
    <location>
        <begin position="710"/>
        <end position="745"/>
    </location>
</feature>
<feature type="zinc finger region" description="A20-type 7" evidence="3">
    <location>
        <begin position="756"/>
        <end position="790"/>
    </location>
</feature>
<feature type="region of interest" description="TRAF-binding">
    <location>
        <begin position="58"/>
        <end position="300"/>
    </location>
</feature>
<feature type="region of interest" description="Interaction with ubiquitin" evidence="26">
    <location>
        <begin position="157"/>
        <end position="159"/>
    </location>
</feature>
<feature type="region of interest" description="Interaction with ubiquitin" evidence="26">
    <location>
        <begin position="190"/>
        <end position="192"/>
    </location>
</feature>
<feature type="region of interest" description="Interaction with ubiquitin" evidence="26">
    <location>
        <begin position="224"/>
        <end position="227"/>
    </location>
</feature>
<feature type="region of interest" description="Disordered" evidence="4">
    <location>
        <begin position="357"/>
        <end position="377"/>
    </location>
</feature>
<feature type="region of interest" description="Interaction with TNIP1" evidence="1">
    <location>
        <begin position="369"/>
        <end position="775"/>
    </location>
</feature>
<feature type="region of interest" description="Interaction with RIPK1" evidence="13">
    <location>
        <begin position="386"/>
        <end position="453"/>
    </location>
</feature>
<feature type="region of interest" description="Disordered" evidence="4">
    <location>
        <begin position="415"/>
        <end position="434"/>
    </location>
</feature>
<feature type="region of interest" description="Disordered" evidence="4">
    <location>
        <begin position="447"/>
        <end position="468"/>
    </location>
</feature>
<feature type="region of interest" description="Disordered" evidence="4">
    <location>
        <begin position="550"/>
        <end position="583"/>
    </location>
</feature>
<feature type="region of interest" description="Required for proteasomal degradation of UBE2N and UBE2D3, TRAF6 deubiquitination, and TAX1BP1 interaction with UBE2N" evidence="1">
    <location>
        <begin position="605"/>
        <end position="655"/>
    </location>
</feature>
<feature type="region of interest" description="Sufficient for inhibitory activity of TNF-induced NF-kappa-B activity" evidence="1">
    <location>
        <begin position="606"/>
        <end position="790"/>
    </location>
</feature>
<feature type="region of interest" description="Disordered" evidence="4">
    <location>
        <begin position="689"/>
        <end position="712"/>
    </location>
</feature>
<feature type="region of interest" description="Required for lysosomal localization and for TRAF2 lysosomal degradation">
    <location>
        <begin position="697"/>
        <end position="790"/>
    </location>
</feature>
<feature type="compositionally biased region" description="Basic and acidic residues" evidence="4">
    <location>
        <begin position="357"/>
        <end position="368"/>
    </location>
</feature>
<feature type="compositionally biased region" description="Basic and acidic residues" evidence="4">
    <location>
        <begin position="689"/>
        <end position="705"/>
    </location>
</feature>
<feature type="active site" evidence="1">
    <location>
        <position position="100"/>
    </location>
</feature>
<feature type="active site" description="Nucleophile" evidence="10">
    <location>
        <position position="103"/>
    </location>
</feature>
<feature type="active site" description="Proton acceptor" evidence="27">
    <location>
        <position position="256"/>
    </location>
</feature>
<feature type="binding site" evidence="3">
    <location>
        <position position="387"/>
    </location>
    <ligand>
        <name>Zn(2+)</name>
        <dbReference type="ChEBI" id="CHEBI:29105"/>
        <label>1</label>
    </ligand>
</feature>
<feature type="binding site" evidence="3">
    <location>
        <position position="392"/>
    </location>
    <ligand>
        <name>Zn(2+)</name>
        <dbReference type="ChEBI" id="CHEBI:29105"/>
        <label>1</label>
    </ligand>
</feature>
<feature type="binding site" evidence="3">
    <location>
        <position position="404"/>
    </location>
    <ligand>
        <name>Zn(2+)</name>
        <dbReference type="ChEBI" id="CHEBI:29105"/>
        <label>1</label>
    </ligand>
</feature>
<feature type="binding site" evidence="3">
    <location>
        <position position="407"/>
    </location>
    <ligand>
        <name>Zn(2+)</name>
        <dbReference type="ChEBI" id="CHEBI:29105"/>
        <label>1</label>
    </ligand>
</feature>
<feature type="binding site" evidence="3">
    <location>
        <position position="478"/>
    </location>
    <ligand>
        <name>Zn(2+)</name>
        <dbReference type="ChEBI" id="CHEBI:29105"/>
        <label>2</label>
    </ligand>
</feature>
<feature type="binding site" evidence="3">
    <location>
        <position position="483"/>
    </location>
    <ligand>
        <name>Zn(2+)</name>
        <dbReference type="ChEBI" id="CHEBI:29105"/>
        <label>2</label>
    </ligand>
</feature>
<feature type="binding site" evidence="3">
    <location>
        <position position="495"/>
    </location>
    <ligand>
        <name>Zn(2+)</name>
        <dbReference type="ChEBI" id="CHEBI:29105"/>
        <label>2</label>
    </ligand>
</feature>
<feature type="binding site" evidence="3">
    <location>
        <position position="498"/>
    </location>
    <ligand>
        <name>Zn(2+)</name>
        <dbReference type="ChEBI" id="CHEBI:29105"/>
        <label>2</label>
    </ligand>
</feature>
<feature type="binding site" evidence="3">
    <location>
        <position position="521"/>
    </location>
    <ligand>
        <name>Zn(2+)</name>
        <dbReference type="ChEBI" id="CHEBI:29105"/>
        <label>3</label>
    </ligand>
</feature>
<feature type="binding site" evidence="3">
    <location>
        <position position="524"/>
    </location>
    <ligand>
        <name>Zn(2+)</name>
        <dbReference type="ChEBI" id="CHEBI:29105"/>
        <label>3</label>
    </ligand>
</feature>
<feature type="binding site" evidence="3">
    <location>
        <position position="536"/>
    </location>
    <ligand>
        <name>Zn(2+)</name>
        <dbReference type="ChEBI" id="CHEBI:29105"/>
        <label>3</label>
    </ligand>
</feature>
<feature type="binding site" evidence="3">
    <location>
        <position position="539"/>
    </location>
    <ligand>
        <name>Zn(2+)</name>
        <dbReference type="ChEBI" id="CHEBI:29105"/>
        <label>3</label>
    </ligand>
</feature>
<feature type="binding site" evidence="3">
    <location>
        <position position="607"/>
    </location>
    <ligand>
        <name>Zn(2+)</name>
        <dbReference type="ChEBI" id="CHEBI:29105"/>
        <label>4</label>
    </ligand>
</feature>
<feature type="binding site" evidence="3">
    <location>
        <position position="612"/>
    </location>
    <ligand>
        <name>Zn(2+)</name>
        <dbReference type="ChEBI" id="CHEBI:29105"/>
        <label>4</label>
    </ligand>
</feature>
<feature type="binding site" evidence="3">
    <location>
        <position position="624"/>
    </location>
    <ligand>
        <name>Zn(2+)</name>
        <dbReference type="ChEBI" id="CHEBI:29105"/>
        <label>4</label>
    </ligand>
</feature>
<feature type="binding site" evidence="3">
    <location>
        <position position="627"/>
    </location>
    <ligand>
        <name>Zn(2+)</name>
        <dbReference type="ChEBI" id="CHEBI:29105"/>
        <label>4</label>
    </ligand>
</feature>
<feature type="binding site" evidence="3">
    <location>
        <position position="657"/>
    </location>
    <ligand>
        <name>Zn(2+)</name>
        <dbReference type="ChEBI" id="CHEBI:29105"/>
        <label>5</label>
    </ligand>
</feature>
<feature type="binding site" evidence="3">
    <location>
        <position position="662"/>
    </location>
    <ligand>
        <name>Zn(2+)</name>
        <dbReference type="ChEBI" id="CHEBI:29105"/>
        <label>5</label>
    </ligand>
</feature>
<feature type="binding site" evidence="3">
    <location>
        <position position="674"/>
    </location>
    <ligand>
        <name>Zn(2+)</name>
        <dbReference type="ChEBI" id="CHEBI:29105"/>
        <label>5</label>
    </ligand>
</feature>
<feature type="binding site" evidence="3">
    <location>
        <position position="677"/>
    </location>
    <ligand>
        <name>Zn(2+)</name>
        <dbReference type="ChEBI" id="CHEBI:29105"/>
        <label>5</label>
    </ligand>
</feature>
<feature type="binding site" evidence="3">
    <location>
        <position position="716"/>
    </location>
    <ligand>
        <name>Zn(2+)</name>
        <dbReference type="ChEBI" id="CHEBI:29105"/>
        <label>6</label>
    </ligand>
</feature>
<feature type="binding site" evidence="3">
    <location>
        <position position="721"/>
    </location>
    <ligand>
        <name>Zn(2+)</name>
        <dbReference type="ChEBI" id="CHEBI:29105"/>
        <label>6</label>
    </ligand>
</feature>
<feature type="binding site" evidence="3">
    <location>
        <position position="733"/>
    </location>
    <ligand>
        <name>Zn(2+)</name>
        <dbReference type="ChEBI" id="CHEBI:29105"/>
        <label>6</label>
    </ligand>
</feature>
<feature type="binding site" evidence="3">
    <location>
        <position position="736"/>
    </location>
    <ligand>
        <name>Zn(2+)</name>
        <dbReference type="ChEBI" id="CHEBI:29105"/>
        <label>6</label>
    </ligand>
</feature>
<feature type="binding site" evidence="3">
    <location>
        <position position="762"/>
    </location>
    <ligand>
        <name>Zn(2+)</name>
        <dbReference type="ChEBI" id="CHEBI:29105"/>
        <label>7</label>
    </ligand>
</feature>
<feature type="binding site" evidence="3">
    <location>
        <position position="767"/>
    </location>
    <ligand>
        <name>Zn(2+)</name>
        <dbReference type="ChEBI" id="CHEBI:29105"/>
        <label>7</label>
    </ligand>
</feature>
<feature type="binding site" evidence="3">
    <location>
        <position position="779"/>
    </location>
    <ligand>
        <name>Zn(2+)</name>
        <dbReference type="ChEBI" id="CHEBI:29105"/>
        <label>7</label>
    </ligand>
</feature>
<feature type="binding site" evidence="3">
    <location>
        <position position="782"/>
    </location>
    <ligand>
        <name>Zn(2+)</name>
        <dbReference type="ChEBI" id="CHEBI:29105"/>
        <label>7</label>
    </ligand>
</feature>
<feature type="site" description="Cleavage; by MALT1">
    <location>
        <begin position="439"/>
        <end position="440"/>
    </location>
</feature>
<feature type="modified residue" description="N-acetylalanine" evidence="30">
    <location>
        <position position="2"/>
    </location>
</feature>
<feature type="modified residue" description="Phosphoserine" evidence="29">
    <location>
        <position position="459"/>
    </location>
</feature>
<feature type="modified residue" description="Phosphoserine" evidence="32">
    <location>
        <position position="575"/>
    </location>
</feature>
<feature type="modified residue" description="Phosphoserine" evidence="31">
    <location>
        <position position="645"/>
    </location>
</feature>
<feature type="sequence variant" id="VAR_020447" description="In dbSNP:rs5029941." evidence="25">
    <original>A</original>
    <variation>V</variation>
    <location>
        <position position="125"/>
    </location>
</feature>
<feature type="sequence variant" id="VAR_022143" description="In dbSNP:rs2230926." evidence="25">
    <original>F</original>
    <variation>C</variation>
    <location>
        <position position="127"/>
    </location>
</feature>
<feature type="sequence variant" id="VAR_076302" description="In AIFBL1; increases inflammatory cytokine secretion; increases NF-kappaB signaling." evidence="20">
    <original>C</original>
    <variation>Y</variation>
    <location>
        <position position="243"/>
    </location>
</feature>
<feature type="sequence variant" id="VAR_029319" description="In dbSNP:rs5029957." evidence="25">
    <original>A</original>
    <variation>P</variation>
    <location>
        <position position="766"/>
    </location>
</feature>
<feature type="mutagenesis site" description="Minor effect on 'Lys-48' deubiquitinase activity. Strongly reduced 'Lys-63' deubiquitinase activity." evidence="9 10">
    <original>D</original>
    <variation>A</variation>
    <location>
        <position position="70"/>
    </location>
</feature>
<feature type="mutagenesis site" description="Minor effect on 'Lys-48' deubiquitinase activity." evidence="10">
    <original>T</original>
    <variation>A</variation>
    <location>
        <position position="97"/>
    </location>
</feature>
<feature type="mutagenesis site" description="Strongly reduced deubiquitinase activity." evidence="10">
    <original>D</original>
    <variation>A</variation>
    <location>
        <position position="100"/>
    </location>
</feature>
<feature type="mutagenesis site" description="Loss of deubiquitinase activity." evidence="6 7 9 10">
    <original>C</original>
    <variation>A</variation>
    <location>
        <position position="103"/>
    </location>
</feature>
<feature type="mutagenesis site" description="Loss of 'Lys-63' deubiquitinating activity. Down-regulation of TNF-induced NF-kappa-B activity less effective." evidence="6 7 9 10">
    <original>C</original>
    <variation>S</variation>
    <location>
        <position position="103"/>
    </location>
</feature>
<feature type="mutagenesis site" description="Reduces deubiquitinase activity." evidence="21">
    <original>H</original>
    <variation>A</variation>
    <location>
        <position position="106"/>
    </location>
</feature>
<feature type="mutagenesis site" description="Strongly reduced 'Lys-48' deubiquitinase activity." evidence="10">
    <original>L</original>
    <variation>A</variation>
    <location>
        <position position="157"/>
    </location>
</feature>
<feature type="mutagenesis site" description="Strongly reduced 'Lys-48' deubiquitinase activity." evidence="10">
    <original>Y</original>
    <variation>A</variation>
    <location>
        <position position="159"/>
    </location>
</feature>
<feature type="mutagenesis site" description="Strongly reduced 'Lys-48' deubiquitinase activity." evidence="10">
    <original>S</original>
    <variation>A</variation>
    <location>
        <position position="190"/>
    </location>
</feature>
<feature type="mutagenesis site" description="Strongly reduced 'Lys-48' deubiquitinase activity." evidence="10">
    <original>E</original>
    <variation>A</variation>
    <location>
        <position position="192"/>
    </location>
</feature>
<feature type="mutagenesis site" description="Strongly reduced 'Lys-48' deubiquitinase activity." evidence="10">
    <original>F</original>
    <variation>A</variation>
    <location>
        <position position="224"/>
    </location>
</feature>
<feature type="mutagenesis site" description="Strongly reduced 'Lys-48' deubiquitinase activity." evidence="10">
    <original>L</original>
    <variation>A</variation>
    <location>
        <position position="227"/>
    </location>
</feature>
<feature type="mutagenesis site" description="Loss of deubiquitinase activity." evidence="9 21">
    <original>H</original>
    <variation>A</variation>
    <location>
        <position position="256"/>
    </location>
</feature>
<feature type="mutagenesis site" description="No effect on ubiquitin ligase activity; when associated with A-524." evidence="7">
    <original>C</original>
    <variation>A</variation>
    <location>
        <position position="521"/>
    </location>
</feature>
<feature type="mutagenesis site" description="No effect on ubiquitin ligase activity; when associated with A-521." evidence="7">
    <original>C</original>
    <variation>A</variation>
    <location>
        <position position="524"/>
    </location>
</feature>
<feature type="mutagenesis site" description="Abolishes interactionj with YWHAZ and YWHAH; no effect on inhibitory activity of TNF-induced NF-kappa-B activation." evidence="23">
    <original>R</original>
    <variation>A</variation>
    <location>
        <position position="562"/>
    </location>
</feature>
<feature type="mutagenesis site" description="Abolishes interactionj with YWHAZ and YWHAH; no effect on inhibitory activity of TNF-induced NF-kappa-B activation." evidence="23">
    <original>S</original>
    <variation>A</variation>
    <location>
        <position position="565"/>
    </location>
</feature>
<feature type="mutagenesis site" description="Impairs ubiquitination activity. Loss of down-regulation of NF-kappa-B activity; when associated with A-615 or R-626." evidence="16">
    <original>Y</original>
    <variation>A</variation>
    <location>
        <position position="614"/>
    </location>
</feature>
<feature type="mutagenesis site" description="Impairs ubiquitination activity. Loss of down-regulation of NF-kappa-B activity; when associated with A-614." evidence="16">
    <original>F</original>
    <variation>A</variation>
    <location>
        <position position="615"/>
    </location>
</feature>
<feature type="mutagenesis site" description="Marked attenuation of ubiquitin ligase activity and inhibition of RIPK1 degradation; when associated with A-627." evidence="7">
    <original>C</original>
    <variation>A</variation>
    <location>
        <position position="624"/>
    </location>
</feature>
<feature type="mutagenesis site" description="Impairs ubiquitination activity. Loss of down-regulation of NF-kappa-B activity; when associated with A-614." evidence="16">
    <original>L</original>
    <variation>R</variation>
    <location>
        <position position="626"/>
    </location>
</feature>
<feature type="mutagenesis site" description="Marked attenuation of ubiquitin ligase activity and inhibition of RIPK1 degradation; when associated with A-624." evidence="7">
    <original>C</original>
    <variation>A</variation>
    <location>
        <position position="627"/>
    </location>
</feature>
<feature type="mutagenesis site" description="Impairs polyubiquitin binding, abolishes inhibition of IKK activation." evidence="17">
    <original>FG</original>
    <variation>AA</variation>
    <location>
        <begin position="770"/>
        <end position="771"/>
    </location>
</feature>
<feature type="mutagenesis site" description="Impairs polyubiquitin binding, abolishes inhibition of IKK activation; when associated with A-782." evidence="17">
    <original>C</original>
    <variation>A</variation>
    <location>
        <position position="779"/>
    </location>
</feature>
<feature type="mutagenesis site" description="Impairs polyubiquitin binding, abolishes inhibition of IKK activation; when associated with A-779." evidence="17">
    <original>C</original>
    <variation>A</variation>
    <location>
        <position position="782"/>
    </location>
</feature>
<feature type="helix" evidence="38">
    <location>
        <begin position="10"/>
        <end position="13"/>
    </location>
</feature>
<feature type="helix" evidence="38">
    <location>
        <begin position="15"/>
        <end position="27"/>
    </location>
</feature>
<feature type="strand" evidence="38">
    <location>
        <begin position="33"/>
        <end position="35"/>
    </location>
</feature>
<feature type="strand" evidence="38">
    <location>
        <begin position="39"/>
        <end position="42"/>
    </location>
</feature>
<feature type="helix" evidence="38">
    <location>
        <begin position="43"/>
        <end position="45"/>
    </location>
</feature>
<feature type="strand" evidence="39">
    <location>
        <begin position="54"/>
        <end position="56"/>
    </location>
</feature>
<feature type="helix" evidence="38">
    <location>
        <begin position="58"/>
        <end position="68"/>
    </location>
</feature>
<feature type="helix" evidence="38">
    <location>
        <begin position="71"/>
        <end position="79"/>
    </location>
</feature>
<feature type="strand" evidence="39">
    <location>
        <begin position="82"/>
        <end position="84"/>
    </location>
</feature>
<feature type="strand" evidence="35">
    <location>
        <begin position="87"/>
        <end position="89"/>
    </location>
</feature>
<feature type="strand" evidence="38">
    <location>
        <begin position="92"/>
        <end position="95"/>
    </location>
</feature>
<feature type="helix" evidence="38">
    <location>
        <begin position="103"/>
        <end position="113"/>
    </location>
</feature>
<feature type="helix" evidence="38">
    <location>
        <begin position="121"/>
        <end position="132"/>
    </location>
</feature>
<feature type="helix" evidence="38">
    <location>
        <begin position="136"/>
        <end position="147"/>
    </location>
</feature>
<feature type="helix" evidence="40">
    <location>
        <begin position="152"/>
        <end position="155"/>
    </location>
</feature>
<feature type="helix" evidence="38">
    <location>
        <begin position="164"/>
        <end position="174"/>
    </location>
</feature>
<feature type="strand" evidence="40">
    <location>
        <begin position="176"/>
        <end position="178"/>
    </location>
</feature>
<feature type="strand" evidence="35">
    <location>
        <begin position="181"/>
        <end position="185"/>
    </location>
</feature>
<feature type="helix" evidence="38">
    <location>
        <begin position="193"/>
        <end position="203"/>
    </location>
</feature>
<feature type="strand" evidence="38">
    <location>
        <begin position="207"/>
        <end position="211"/>
    </location>
</feature>
<feature type="strand" evidence="40">
    <location>
        <begin position="213"/>
        <end position="216"/>
    </location>
</feature>
<feature type="turn" evidence="40">
    <location>
        <begin position="218"/>
        <end position="220"/>
    </location>
</feature>
<feature type="strand" evidence="40">
    <location>
        <begin position="221"/>
        <end position="226"/>
    </location>
</feature>
<feature type="strand" evidence="38">
    <location>
        <begin position="231"/>
        <end position="233"/>
    </location>
</feature>
<feature type="helix" evidence="38">
    <location>
        <begin position="240"/>
        <end position="242"/>
    </location>
</feature>
<feature type="strand" evidence="38">
    <location>
        <begin position="248"/>
        <end position="253"/>
    </location>
</feature>
<feature type="strand" evidence="38">
    <location>
        <begin position="256"/>
        <end position="263"/>
    </location>
</feature>
<feature type="strand" evidence="39">
    <location>
        <begin position="267"/>
        <end position="270"/>
    </location>
</feature>
<feature type="strand" evidence="38">
    <location>
        <begin position="272"/>
        <end position="279"/>
    </location>
</feature>
<feature type="strand" evidence="38">
    <location>
        <begin position="282"/>
        <end position="285"/>
    </location>
</feature>
<feature type="helix" evidence="38">
    <location>
        <begin position="293"/>
        <end position="297"/>
    </location>
</feature>
<feature type="helix" evidence="38">
    <location>
        <begin position="299"/>
        <end position="306"/>
    </location>
</feature>
<feature type="strand" evidence="38">
    <location>
        <begin position="309"/>
        <end position="315"/>
    </location>
</feature>
<feature type="strand" evidence="38">
    <location>
        <begin position="317"/>
        <end position="329"/>
    </location>
</feature>
<feature type="helix" evidence="38">
    <location>
        <begin position="337"/>
        <end position="339"/>
    </location>
</feature>
<feature type="helix" evidence="38">
    <location>
        <begin position="341"/>
        <end position="354"/>
    </location>
</feature>
<feature type="helix" evidence="35">
    <location>
        <begin position="359"/>
        <end position="361"/>
    </location>
</feature>
<feature type="strand" evidence="34">
    <location>
        <begin position="384"/>
        <end position="386"/>
    </location>
</feature>
<feature type="turn" evidence="34">
    <location>
        <begin position="398"/>
        <end position="402"/>
    </location>
</feature>
<feature type="helix" evidence="34">
    <location>
        <begin position="405"/>
        <end position="412"/>
    </location>
</feature>
<feature type="strand" evidence="33">
    <location>
        <begin position="604"/>
        <end position="606"/>
    </location>
</feature>
<feature type="strand" evidence="36">
    <location>
        <begin position="613"/>
        <end position="615"/>
    </location>
</feature>
<feature type="helix" evidence="36">
    <location>
        <begin position="618"/>
        <end position="620"/>
    </location>
</feature>
<feature type="helix" evidence="36">
    <location>
        <begin position="625"/>
        <end position="634"/>
    </location>
</feature>
<feature type="helix" evidence="37">
    <location>
        <begin position="773"/>
        <end position="775"/>
    </location>
</feature>
<feature type="helix" evidence="37">
    <location>
        <begin position="780"/>
        <end position="788"/>
    </location>
</feature>
<organism>
    <name type="scientific">Homo sapiens</name>
    <name type="common">Human</name>
    <dbReference type="NCBI Taxonomy" id="9606"/>
    <lineage>
        <taxon>Eukaryota</taxon>
        <taxon>Metazoa</taxon>
        <taxon>Chordata</taxon>
        <taxon>Craniata</taxon>
        <taxon>Vertebrata</taxon>
        <taxon>Euteleostomi</taxon>
        <taxon>Mammalia</taxon>
        <taxon>Eutheria</taxon>
        <taxon>Euarchontoglires</taxon>
        <taxon>Primates</taxon>
        <taxon>Haplorrhini</taxon>
        <taxon>Catarrhini</taxon>
        <taxon>Hominidae</taxon>
        <taxon>Homo</taxon>
    </lineage>
</organism>
<sequence length="790" mass="89614">MAEQVLPQALYLSNMRKAVKIRERTPEDIFKPTNGIIHHFKTMHRYTLEMFRTCQFCPQFREIIHKALIDRNIQATLESQKKLNWCREVRKLVALKTNGDGNCLMHATSQYMWGVQDTDLVLRKALFSTLKETDTRNFKFRWQLESLKSQEFVETGLCYDTRNWNDEWDNLIKMASTDTPMARSGLQYNSLEEIHIFVLCNILRRPIIVISDKMLRSLESGSNFAPLKVGGIYLPLHWPAQECYRYPIVLGYDSHHFVPLVTLKDSGPEIRAVPLVNRDRGRFEDLKVHFLTDPENEMKEKLLKEYLMVIEIPVQGWDHGTTHLINAAKLDEANLPKEINLVDDYFELVQHEYKKWQENSEQGRREGHAQNPMEPSVPQLSLMDVKCETPNCPFFMSVNTQPLCHECSERRQKNQNKLPKLNSKPGPEGLPGMALGASRGEAYEPLAWNPEESTGGPHSAPPTAPSPFLFSETTAMKCRSPGCPFTLNVQHNGFCERCHNARQLHASHAPDHTRHLDPGKCQACLQDVTRTFNGICSTCFKRTTAEASSSLSTSLPPSCHQRSKSDPSRLVRSPSPHSCHRAGNDAPAGCLSQAARTPGDRTGTSKCRKAGCVYFGTPENKGFCTLCFIEYRENKHFAAASGKVSPTASRFQNTIPCLGRECGTLGSTMFEGYCQKCFIEAQNQRFHEAKRTEEQLRSSQRRDVPRTTQSTSRPKCARASCKNILACRSEELCMECQHPNQRMGPGAHRGEPAPEDPPKQRCRAPACDHFGNAKCNGYCNECFQFKQMYG</sequence>
<keyword id="KW-0002">3D-structure</keyword>
<keyword id="KW-0007">Acetylation</keyword>
<keyword id="KW-0053">Apoptosis</keyword>
<keyword id="KW-0963">Cytoplasm</keyword>
<keyword id="KW-0225">Disease variant</keyword>
<keyword id="KW-0238">DNA-binding</keyword>
<keyword id="KW-0378">Hydrolase</keyword>
<keyword id="KW-0395">Inflammatory response</keyword>
<keyword id="KW-0458">Lysosome</keyword>
<keyword id="KW-0479">Metal-binding</keyword>
<keyword id="KW-0511">Multifunctional enzyme</keyword>
<keyword id="KW-0539">Nucleus</keyword>
<keyword id="KW-0597">Phosphoprotein</keyword>
<keyword id="KW-0645">Protease</keyword>
<keyword id="KW-1267">Proteomics identification</keyword>
<keyword id="KW-1185">Reference proteome</keyword>
<keyword id="KW-0677">Repeat</keyword>
<keyword id="KW-0788">Thiol protease</keyword>
<keyword id="KW-0808">Transferase</keyword>
<keyword id="KW-0833">Ubl conjugation pathway</keyword>
<keyword id="KW-0862">Zinc</keyword>
<keyword id="KW-0863">Zinc-finger</keyword>
<protein>
    <recommendedName>
        <fullName>Tumor necrosis factor alpha-induced protein 3</fullName>
        <shortName>TNF alpha-induced protein 3</shortName>
        <ecNumber>2.3.2.-</ecNumber>
        <ecNumber evidence="6 9 10 18 21">3.4.19.12</ecNumber>
    </recommendedName>
    <alternativeName>
        <fullName>OTU domain-containing protein 7C</fullName>
    </alternativeName>
    <alternativeName>
        <fullName>Putative DNA-binding protein A20</fullName>
    </alternativeName>
    <alternativeName>
        <fullName>Zinc finger protein A20</fullName>
    </alternativeName>
    <component>
        <recommendedName>
            <fullName>A20p50</fullName>
        </recommendedName>
    </component>
    <component>
        <recommendedName>
            <fullName>A20p37</fullName>
        </recommendedName>
    </component>
</protein>